<gene>
    <name type="primary">LPL</name>
    <name type="synonym">LIPD</name>
</gene>
<accession>P06858</accession>
<accession>B2R5T9</accession>
<accession>Q16282</accession>
<accession>Q16283</accession>
<accession>Q96FC4</accession>
<proteinExistence type="evidence at protein level"/>
<organism>
    <name type="scientific">Homo sapiens</name>
    <name type="common">Human</name>
    <dbReference type="NCBI Taxonomy" id="9606"/>
    <lineage>
        <taxon>Eukaryota</taxon>
        <taxon>Metazoa</taxon>
        <taxon>Chordata</taxon>
        <taxon>Craniata</taxon>
        <taxon>Vertebrata</taxon>
        <taxon>Euteleostomi</taxon>
        <taxon>Mammalia</taxon>
        <taxon>Eutheria</taxon>
        <taxon>Euarchontoglires</taxon>
        <taxon>Primates</taxon>
        <taxon>Haplorrhini</taxon>
        <taxon>Catarrhini</taxon>
        <taxon>Hominidae</taxon>
        <taxon>Homo</taxon>
    </lineage>
</organism>
<reference key="1">
    <citation type="journal article" date="1987" name="Science">
        <title>Human lipoprotein lipase complementary DNA sequence.</title>
        <authorList>
            <person name="Wion K.L."/>
            <person name="Kirchgessner T.G."/>
            <person name="Lusis A.J."/>
            <person name="Schotz M.C."/>
            <person name="Lawn R.M."/>
        </authorList>
    </citation>
    <scope>NUCLEOTIDE SEQUENCE [MRNA]</scope>
</reference>
<reference key="2">
    <citation type="journal article" date="1989" name="Nucleic Acids Res.">
        <title>Nucleotide sequence of human cDNA coding for a lipoprotein lipase (LPL) cloned from placental cDNA library.</title>
        <authorList>
            <person name="Gotoda T."/>
            <person name="Senda M."/>
            <person name="Gamou T."/>
            <person name="Furuichi Y."/>
            <person name="Oka K."/>
        </authorList>
    </citation>
    <scope>NUCLEOTIDE SEQUENCE [MRNA]</scope>
    <source>
        <tissue>Placenta</tissue>
    </source>
</reference>
<reference key="3">
    <citation type="journal article" date="1990" name="Nucleic Acids Res.">
        <title>DNA sequence of lipoprotein lipase cDNA cloned from human monocytic leukemia THP-1 cells.</title>
        <authorList>
            <person name="Takagi A."/>
            <person name="Ikeda Y."/>
            <person name="Yamamoto A."/>
        </authorList>
    </citation>
    <scope>NUCLEOTIDE SEQUENCE [MRNA]</scope>
</reference>
<reference key="4">
    <citation type="journal article" date="1992" name="Gene">
        <title>The lipoprotein lipase-encoding human gene: sequence from intron-6 to intron-9 and presence in intron-7 of a 40-million-year-old Alu sequence.</title>
        <authorList>
            <person name="Chuat J.-C."/>
            <person name="Raisonnier A."/>
            <person name="Etienne J."/>
            <person name="Galibert F."/>
        </authorList>
    </citation>
    <scope>NUCLEOTIDE SEQUENCE [GENOMIC DNA]</scope>
</reference>
<reference key="5">
    <citation type="submission" date="2003-05" db="EMBL/GenBank/DDBJ databases">
        <title>Cloning of human full-length CDSs in BD Creator(TM) system donor vector.</title>
        <authorList>
            <person name="Kalnine N."/>
            <person name="Chen X."/>
            <person name="Rolfs A."/>
            <person name="Halleck A."/>
            <person name="Hines L."/>
            <person name="Eisenstein S."/>
            <person name="Koundinya M."/>
            <person name="Raphael J."/>
            <person name="Moreira D."/>
            <person name="Kelley T."/>
            <person name="LaBaer J."/>
            <person name="Lin Y."/>
            <person name="Phelan M."/>
            <person name="Farmer A."/>
        </authorList>
    </citation>
    <scope>NUCLEOTIDE SEQUENCE [LARGE SCALE MRNA]</scope>
    <scope>VARIANT SER-318</scope>
</reference>
<reference key="6">
    <citation type="journal article" date="2004" name="Nat. Genet.">
        <title>Complete sequencing and characterization of 21,243 full-length human cDNAs.</title>
        <authorList>
            <person name="Ota T."/>
            <person name="Suzuki Y."/>
            <person name="Nishikawa T."/>
            <person name="Otsuki T."/>
            <person name="Sugiyama T."/>
            <person name="Irie R."/>
            <person name="Wakamatsu A."/>
            <person name="Hayashi K."/>
            <person name="Sato H."/>
            <person name="Nagai K."/>
            <person name="Kimura K."/>
            <person name="Makita H."/>
            <person name="Sekine M."/>
            <person name="Obayashi M."/>
            <person name="Nishi T."/>
            <person name="Shibahara T."/>
            <person name="Tanaka T."/>
            <person name="Ishii S."/>
            <person name="Yamamoto J."/>
            <person name="Saito K."/>
            <person name="Kawai Y."/>
            <person name="Isono Y."/>
            <person name="Nakamura Y."/>
            <person name="Nagahari K."/>
            <person name="Murakami K."/>
            <person name="Yasuda T."/>
            <person name="Iwayanagi T."/>
            <person name="Wagatsuma M."/>
            <person name="Shiratori A."/>
            <person name="Sudo H."/>
            <person name="Hosoiri T."/>
            <person name="Kaku Y."/>
            <person name="Kodaira H."/>
            <person name="Kondo H."/>
            <person name="Sugawara M."/>
            <person name="Takahashi M."/>
            <person name="Kanda K."/>
            <person name="Yokoi T."/>
            <person name="Furuya T."/>
            <person name="Kikkawa E."/>
            <person name="Omura Y."/>
            <person name="Abe K."/>
            <person name="Kamihara K."/>
            <person name="Katsuta N."/>
            <person name="Sato K."/>
            <person name="Tanikawa M."/>
            <person name="Yamazaki M."/>
            <person name="Ninomiya K."/>
            <person name="Ishibashi T."/>
            <person name="Yamashita H."/>
            <person name="Murakawa K."/>
            <person name="Fujimori K."/>
            <person name="Tanai H."/>
            <person name="Kimata M."/>
            <person name="Watanabe M."/>
            <person name="Hiraoka S."/>
            <person name="Chiba Y."/>
            <person name="Ishida S."/>
            <person name="Ono Y."/>
            <person name="Takiguchi S."/>
            <person name="Watanabe S."/>
            <person name="Yosida M."/>
            <person name="Hotuta T."/>
            <person name="Kusano J."/>
            <person name="Kanehori K."/>
            <person name="Takahashi-Fujii A."/>
            <person name="Hara H."/>
            <person name="Tanase T.-O."/>
            <person name="Nomura Y."/>
            <person name="Togiya S."/>
            <person name="Komai F."/>
            <person name="Hara R."/>
            <person name="Takeuchi K."/>
            <person name="Arita M."/>
            <person name="Imose N."/>
            <person name="Musashino K."/>
            <person name="Yuuki H."/>
            <person name="Oshima A."/>
            <person name="Sasaki N."/>
            <person name="Aotsuka S."/>
            <person name="Yoshikawa Y."/>
            <person name="Matsunawa H."/>
            <person name="Ichihara T."/>
            <person name="Shiohata N."/>
            <person name="Sano S."/>
            <person name="Moriya S."/>
            <person name="Momiyama H."/>
            <person name="Satoh N."/>
            <person name="Takami S."/>
            <person name="Terashima Y."/>
            <person name="Suzuki O."/>
            <person name="Nakagawa S."/>
            <person name="Senoh A."/>
            <person name="Mizoguchi H."/>
            <person name="Goto Y."/>
            <person name="Shimizu F."/>
            <person name="Wakebe H."/>
            <person name="Hishigaki H."/>
            <person name="Watanabe T."/>
            <person name="Sugiyama A."/>
            <person name="Takemoto M."/>
            <person name="Kawakami B."/>
            <person name="Yamazaki M."/>
            <person name="Watanabe K."/>
            <person name="Kumagai A."/>
            <person name="Itakura S."/>
            <person name="Fukuzumi Y."/>
            <person name="Fujimori Y."/>
            <person name="Komiyama M."/>
            <person name="Tashiro H."/>
            <person name="Tanigami A."/>
            <person name="Fujiwara T."/>
            <person name="Ono T."/>
            <person name="Yamada K."/>
            <person name="Fujii Y."/>
            <person name="Ozaki K."/>
            <person name="Hirao M."/>
            <person name="Ohmori Y."/>
            <person name="Kawabata A."/>
            <person name="Hikiji T."/>
            <person name="Kobatake N."/>
            <person name="Inagaki H."/>
            <person name="Ikema Y."/>
            <person name="Okamoto S."/>
            <person name="Okitani R."/>
            <person name="Kawakami T."/>
            <person name="Noguchi S."/>
            <person name="Itoh T."/>
            <person name="Shigeta K."/>
            <person name="Senba T."/>
            <person name="Matsumura K."/>
            <person name="Nakajima Y."/>
            <person name="Mizuno T."/>
            <person name="Morinaga M."/>
            <person name="Sasaki M."/>
            <person name="Togashi T."/>
            <person name="Oyama M."/>
            <person name="Hata H."/>
            <person name="Watanabe M."/>
            <person name="Komatsu T."/>
            <person name="Mizushima-Sugano J."/>
            <person name="Satoh T."/>
            <person name="Shirai Y."/>
            <person name="Takahashi Y."/>
            <person name="Nakagawa K."/>
            <person name="Okumura K."/>
            <person name="Nagase T."/>
            <person name="Nomura N."/>
            <person name="Kikuchi H."/>
            <person name="Masuho Y."/>
            <person name="Yamashita R."/>
            <person name="Nakai K."/>
            <person name="Yada T."/>
            <person name="Nakamura Y."/>
            <person name="Ohara O."/>
            <person name="Isogai T."/>
            <person name="Sugano S."/>
        </authorList>
    </citation>
    <scope>NUCLEOTIDE SEQUENCE [LARGE SCALE MRNA]</scope>
    <source>
        <tissue>Cerebellum</tissue>
    </source>
</reference>
<reference key="7">
    <citation type="submission" date="2005-09" db="EMBL/GenBank/DDBJ databases">
        <authorList>
            <person name="Mural R.J."/>
            <person name="Istrail S."/>
            <person name="Sutton G.G."/>
            <person name="Florea L."/>
            <person name="Halpern A.L."/>
            <person name="Mobarry C.M."/>
            <person name="Lippert R."/>
            <person name="Walenz B."/>
            <person name="Shatkay H."/>
            <person name="Dew I."/>
            <person name="Miller J.R."/>
            <person name="Flanigan M.J."/>
            <person name="Edwards N.J."/>
            <person name="Bolanos R."/>
            <person name="Fasulo D."/>
            <person name="Halldorsson B.V."/>
            <person name="Hannenhalli S."/>
            <person name="Turner R."/>
            <person name="Yooseph S."/>
            <person name="Lu F."/>
            <person name="Nusskern D.R."/>
            <person name="Shue B.C."/>
            <person name="Zheng X.H."/>
            <person name="Zhong F."/>
            <person name="Delcher A.L."/>
            <person name="Huson D.H."/>
            <person name="Kravitz S.A."/>
            <person name="Mouchard L."/>
            <person name="Reinert K."/>
            <person name="Remington K.A."/>
            <person name="Clark A.G."/>
            <person name="Waterman M.S."/>
            <person name="Eichler E.E."/>
            <person name="Adams M.D."/>
            <person name="Hunkapiller M.W."/>
            <person name="Myers E.W."/>
            <person name="Venter J.C."/>
        </authorList>
    </citation>
    <scope>NUCLEOTIDE SEQUENCE [LARGE SCALE GENOMIC DNA]</scope>
</reference>
<reference key="8">
    <citation type="journal article" date="2004" name="Genome Res.">
        <title>The status, quality, and expansion of the NIH full-length cDNA project: the Mammalian Gene Collection (MGC).</title>
        <authorList>
            <consortium name="The MGC Project Team"/>
        </authorList>
    </citation>
    <scope>NUCLEOTIDE SEQUENCE [LARGE SCALE MRNA]</scope>
    <scope>VARIANT SER-318</scope>
    <source>
        <tissue>Brain</tissue>
    </source>
</reference>
<reference key="9">
    <citation type="journal article" date="1992" name="Mol. Cell. Biol.">
        <title>Characterization of the human lipoprotein lipase (LPL) promoter: evidence of two cis-regulatory regions, LP-alpha and LP-beta, of importance for the differentiation-linked induction of the LPL gene during adipogenesis.</title>
        <authorList>
            <person name="Enerbaeck S."/>
            <person name="Ohlsson B.G."/>
            <person name="Samuelsson L."/>
            <person name="Bjursell G."/>
        </authorList>
    </citation>
    <scope>NUCLEOTIDE SEQUENCE [GENOMIC DNA] OF 1-5</scope>
</reference>
<reference key="10">
    <citation type="journal article" date="1990" name="Biochim. Biophys. Acta">
        <title>Rapid and simple isolation procedure for lipoprotein lipase from human milk.</title>
        <authorList>
            <person name="Zechner R."/>
        </authorList>
    </citation>
    <scope>PROTEIN SEQUENCE OF 28-44</scope>
    <scope>SUBCELLULAR LOCATION</scope>
    <scope>CATALYTIC ACTIVITY</scope>
    <scope>TISSUE SPECIFICITY</scope>
    <source>
        <tissue>Milk</tissue>
    </source>
</reference>
<reference key="11">
    <citation type="journal article" date="1995" name="J. Biol. Chem.">
        <title>Human hepatic and lipoprotein lipase: the loop covering the catalytic site mediates lipase substrate specificity.</title>
        <authorList>
            <person name="Dugi K.A."/>
            <person name="Dichek H.L."/>
            <person name="Santamarina-Fojo S."/>
        </authorList>
    </citation>
    <scope>FUNCTION</scope>
    <scope>CATALYTIC ACTIVITY</scope>
    <scope>REGION</scope>
    <scope>MUTAGENESIS OF 244-ASN--VAL-264; 245-ILE--LEU-263; 245-ILE--ALA-248 AND 262-GLN--LEU-263</scope>
</reference>
<reference key="12">
    <citation type="journal article" date="1995" name="J. Clin. Invest.">
        <title>Severe hypertriglyceridemia, reduced high density lipoprotein, and neonatal death in lipoprotein lipase knockout mice. Mild hypertriglyceridemia with impaired very low density lipoprotein clearance in heterozygotes.</title>
        <authorList>
            <person name="Weinstock P.H."/>
            <person name="Bisgaier C.L."/>
            <person name="Aalto-Setaelae K."/>
            <person name="Radner H."/>
            <person name="Ramakrishnan R."/>
            <person name="Levak-Frank S."/>
            <person name="Essenburg A.D."/>
            <person name="Zechner R."/>
            <person name="Breslow J.L."/>
        </authorList>
    </citation>
    <scope>FUNCTION</scope>
</reference>
<reference key="13">
    <citation type="journal article" date="2001" name="J. Clin. Invest.">
        <title>Heparin-binding defective lipoprotein lipase is unstable and causes abnormalities in lipid delivery to tissues.</title>
        <authorList>
            <person name="Lutz E.P."/>
            <person name="Merkel M."/>
            <person name="Kako Y."/>
            <person name="Melford K."/>
            <person name="Radner H."/>
            <person name="Breslow J.L."/>
            <person name="Bensadoun A."/>
            <person name="Goldberg I.J."/>
        </authorList>
    </citation>
    <scope>HEPARIN-BINDING</scope>
    <scope>CATALYTIC ACTIVITY</scope>
    <scope>FUNCTION</scope>
    <scope>SUBCELLULAR LOCATION</scope>
    <scope>MUTAGENESIS OF LYS-430; ARG-432 AND LYS-434</scope>
</reference>
<reference key="14">
    <citation type="journal article" date="2002" name="J. Lipid Res.">
        <title>Characterization of the lipolytic activity of endothelial lipase.</title>
        <authorList>
            <person name="McCoy M.G."/>
            <person name="Sun G.-S."/>
            <person name="Marchadier D."/>
            <person name="Maugeais C."/>
            <person name="Glick J.M."/>
            <person name="Rader D.J."/>
        </authorList>
    </citation>
    <scope>FUNCTION</scope>
    <scope>CATALYTIC ACTIVITY</scope>
    <scope>ACTIVITY REGULATION</scope>
</reference>
<reference key="15">
    <citation type="journal article" date="2005" name="J. Biol. Chem.">
        <title>Calcium triggers folding of lipoprotein lipase into active dimers.</title>
        <authorList>
            <person name="Zhang L."/>
            <person name="Lookene A."/>
            <person name="Wu G."/>
            <person name="Olivecrona G."/>
        </authorList>
    </citation>
    <scope>CATALYTIC ACTIVITY</scope>
    <scope>SUBUNIT</scope>
    <scope>CALCIUM BINDING</scope>
</reference>
<reference key="16">
    <citation type="journal article" date="2007" name="Biochim. Biophys. Acta">
        <title>Normal binding of lipoprotein lipase, chylomicrons, and apo-AV to GPIHBP1 containing a G56R amino acid substitution.</title>
        <authorList>
            <person name="Gin P."/>
            <person name="Beigneux A.P."/>
            <person name="Davies B."/>
            <person name="Young M.F."/>
            <person name="Ryan R.O."/>
            <person name="Bensadoun A."/>
            <person name="Fong L.G."/>
            <person name="Young S.G."/>
        </authorList>
    </citation>
    <scope>INTERACTION WITH GPIHBP1</scope>
</reference>
<reference key="17">
    <citation type="journal article" date="2008" name="Proteomics">
        <title>Identification of N-linked glycoproteins in human milk by hydrophilic interaction liquid chromatography and mass spectrometry.</title>
        <authorList>
            <person name="Picariello G."/>
            <person name="Ferranti P."/>
            <person name="Mamone G."/>
            <person name="Roepstorff P."/>
            <person name="Addeo F."/>
        </authorList>
    </citation>
    <scope>GLYCOSYLATION [LARGE SCALE ANALYSIS] AT ASN-70</scope>
    <source>
        <tissue>Milk</tissue>
    </source>
</reference>
<reference key="18">
    <citation type="journal article" date="2011" name="J. Cell Sci.">
        <title>SorLA regulates the activity of lipoprotein lipase by intracellular trafficking.</title>
        <authorList>
            <person name="Klinger S.C."/>
            <person name="Glerup S."/>
            <person name="Raarup M.K."/>
            <person name="Mari M.C."/>
            <person name="Nyegaard M."/>
            <person name="Koster G."/>
            <person name="Prabakaran T."/>
            <person name="Nilsson S.K."/>
            <person name="Kjaergaard M.M."/>
            <person name="Bakke O."/>
            <person name="Nykjaer A."/>
            <person name="Olivecrona G."/>
            <person name="Petersen C.M."/>
            <person name="Nielsen M.S."/>
        </authorList>
    </citation>
    <scope>INTERACTION WITH SORL1</scope>
</reference>
<reference key="19">
    <citation type="journal article" date="2014" name="Cell Metab.">
        <title>The ER-associated degradation adaptor protein Sel1L regulates LPL secretion and lipid metabolism.</title>
        <authorList>
            <person name="Sha H."/>
            <person name="Sun S."/>
            <person name="Francisco A.B."/>
            <person name="Ehrhardt N."/>
            <person name="Xue Z."/>
            <person name="Liu L."/>
            <person name="Lawrence P."/>
            <person name="Mattijssen F."/>
            <person name="Guber R.D."/>
            <person name="Panhwar M.S."/>
            <person name="Brenna J.T."/>
            <person name="Shi H."/>
            <person name="Xue B."/>
            <person name="Kersten S."/>
            <person name="Bensadoun A."/>
            <person name="Peterfy M."/>
            <person name="Long Q."/>
            <person name="Qi L."/>
        </authorList>
    </citation>
    <scope>INTERACTION WITH SEL1L AND LMF1</scope>
</reference>
<reference key="20">
    <citation type="journal article" date="2014" name="Cell Metab.">
        <title>The GPIHBP1-LPL complex is responsible for the margination of triglyceride-rich lipoproteins in capillaries.</title>
        <authorList>
            <person name="Goulbourne C.N."/>
            <person name="Gin P."/>
            <person name="Tatar A."/>
            <person name="Nobumori C."/>
            <person name="Hoenger A."/>
            <person name="Jiang H."/>
            <person name="Grovenor C.R."/>
            <person name="Adeyo O."/>
            <person name="Esko J.D."/>
            <person name="Goldberg I.J."/>
            <person name="Reue K."/>
            <person name="Tontonoz P."/>
            <person name="Bensadoun A."/>
            <person name="Beigneux A.P."/>
            <person name="Young S.G."/>
            <person name="Fong L.G."/>
        </authorList>
    </citation>
    <scope>FUNCTION</scope>
    <scope>MUTAGENESIS OF TRP-417 AND 420-TRP-TRP-421</scope>
</reference>
<reference key="21">
    <citation type="journal article" date="2016" name="Elife">
        <title>The angiopoietin-like protein ANGPTL4 catalyzes unfolding of the hydrolase domain in lipoprotein lipase and the endothelial membrane protein GPIHBP1 counteracts this unfolding.</title>
        <authorList>
            <person name="Mysling S."/>
            <person name="Kristensen K.K."/>
            <person name="Larsson M."/>
            <person name="Kovrov O."/>
            <person name="Bensadouen A."/>
            <person name="Joergensen T.J."/>
            <person name="Olivecrona G."/>
            <person name="Young S.G."/>
            <person name="Ploug M."/>
        </authorList>
    </citation>
    <scope>ACTIVITY REGULATION</scope>
    <scope>INTERACTION WITH GPIHBP1</scope>
</reference>
<reference key="22">
    <citation type="journal article" date="2016" name="Elife">
        <title>The acidic domain of the endothelial membrane protein GPIHBP1 stabilizes lipoprotein lipase activity by preventing unfolding of its catalytic domain.</title>
        <authorList>
            <person name="Mysling S."/>
            <person name="Kristensen K.K."/>
            <person name="Larsson M."/>
            <person name="Beigneux A.P."/>
            <person name="Gaardsvoll H."/>
            <person name="Fong L.G."/>
            <person name="Bensadouen A."/>
            <person name="Joergensen T.J."/>
            <person name="Young S.G."/>
            <person name="Ploug M."/>
        </authorList>
    </citation>
    <scope>CATALYTIC ACTIVITY</scope>
    <scope>INTERACTION WITH GPIHBP1</scope>
    <scope>SUBUNIT</scope>
    <scope>CHARACTERIZATION OF VARIANT HLPP1 TYR-445</scope>
</reference>
<reference key="23">
    <citation type="journal article" date="2017" name="J. Lipid Res.">
        <title>Mobility of 'HSPG-bound' LPL explains how LPL is able to reach GPIHBP1 on capillaries.</title>
        <authorList>
            <person name="Allan C.M."/>
            <person name="Larsson M."/>
            <person name="Jung R.S."/>
            <person name="Ploug M."/>
            <person name="Bensadoun A."/>
            <person name="Beigneux A.P."/>
            <person name="Fong L.G."/>
            <person name="Young S.G."/>
        </authorList>
    </citation>
    <scope>FUNCTION</scope>
    <scope>INTERACTION WITH GPIHBP1</scope>
    <scope>SUBCELLULAR LOCATION</scope>
</reference>
<reference key="24">
    <citation type="journal article" date="2018" name="Proc. Natl. Acad. Sci. U.S.A.">
        <title>A disordered acidic domain in GPIHBP1 harboring a sulfated tyrosine regulates lipoprotein lipase.</title>
        <authorList>
            <person name="Kristensen K.K."/>
            <person name="Midtgaard S.R."/>
            <person name="Mysling S."/>
            <person name="Kovrov O."/>
            <person name="Hansen L.B."/>
            <person name="Skar-Gislinge N."/>
            <person name="Beigneux A.P."/>
            <person name="Kragelund B.B."/>
            <person name="Olivecrona G."/>
            <person name="Young S.G."/>
            <person name="Joergensen T.J.D."/>
            <person name="Fong L.G."/>
            <person name="Ploug M."/>
        </authorList>
    </citation>
    <scope>INTERACTION WITH GPIHBP1</scope>
    <scope>ACTIVITY REGULATION</scope>
    <scope>CATALYTIC ACTIVITY</scope>
</reference>
<reference key="25">
    <citation type="journal article" date="1994" name="J. Biol. Chem.">
        <title>Lipoprotein lipase. Molecular model based on the pancreatic lipase X-ray structure: consequences for heparin binding and catalysis.</title>
        <authorList>
            <person name="van Tilbeurgh H."/>
            <person name="Roussel A."/>
            <person name="Lalouel J.-M."/>
            <person name="Cambillau C."/>
        </authorList>
    </citation>
    <scope>3D-STRUCTURE MODELING</scope>
</reference>
<reference key="26">
    <citation type="journal article" date="2019" name="Proc. Natl. Acad. Sci. U.S.A.">
        <title>Structure of the lipoprotein lipase-GPIHBP1 complex that mediates plasma triglyceride hydrolysis.</title>
        <authorList>
            <person name="Birrane G."/>
            <person name="Beigneux A.P."/>
            <person name="Dwyer B."/>
            <person name="Strack-Logue B."/>
            <person name="Kristensen K.K."/>
            <person name="Francone O.L."/>
            <person name="Fong L.G."/>
            <person name="Mertens H.D.T."/>
            <person name="Pan C.Q."/>
            <person name="Ploug M."/>
            <person name="Young S.G."/>
            <person name="Meiyappan M."/>
        </authorList>
    </citation>
    <scope>X-RAY CRYSTALLOGRAPHY (2.80 ANGSTROMS) OF 28-475 IN COMPLEX WITH GPIHBP1 AND CALCIUM ION</scope>
    <scope>CATALYTIC ACTIVITY</scope>
    <scope>ACTIVE SITE</scope>
    <scope>SUBCELLULAR LOCATION</scope>
    <scope>SUBUNIT</scope>
    <scope>DISULFIDE BOND</scope>
    <scope>GLYCOSYLATION AT ASN-70 AND ASN-386</scope>
    <scope>MUTAGENESIS OF SER-159 AND ASP-202</scope>
    <scope>CHARACTERIZATION OF VARIANTS HLPP1 VAL-201; ARG-404 AND TYR-445</scope>
</reference>
<reference key="27">
    <citation type="journal article" date="1991" name="Curr. Opin. Lipidol.">
        <title>Genetic variants affecting human lipoprotein and hepatic lipases.</title>
        <authorList>
            <person name="Hayden M.R."/>
            <person name="Ma Y."/>
            <person name="Brunzell J."/>
            <person name="Henderson H.E."/>
        </authorList>
    </citation>
    <scope>REVIEW ON VARIANTS</scope>
</reference>
<reference key="28">
    <citation type="journal article" date="1990" name="Am. J. Hum. Genet.">
        <title>Compound heterozygote for lipoprotein lipase deficiency: Ser--&gt;Thr244 and transition in 3' splice site of intron 2 (AG--&gt;AA) in the lipoprotein lipase gene.</title>
        <authorList>
            <person name="Hata A."/>
            <person name="Emi M."/>
            <person name="Luc G."/>
            <person name="Basdevant A."/>
            <person name="Gambert P."/>
            <person name="Iverius P.-H."/>
            <person name="Lalouel J.-M."/>
        </authorList>
    </citation>
    <scope>VARIANT HLPP1 THR-271</scope>
    <scope>INVOLVEMENT IN HLPP1</scope>
</reference>
<reference key="29">
    <citation type="journal article" date="1990" name="J. Biol. Chem.">
        <title>Missense mutation (Gly--&gt;Glu188) of human lipoprotein lipase imparting functional deficiency.</title>
        <authorList>
            <person name="Emi M."/>
            <person name="Wilson D.E."/>
            <person name="Iverius P.H."/>
            <person name="Wiu L."/>
            <person name="Hata A."/>
            <person name="Hegele R."/>
            <person name="Williams R.R."/>
            <person name="Lalouel J.-M."/>
        </authorList>
    </citation>
    <scope>VARIANT HLPP1 GLU-215</scope>
</reference>
<reference key="30">
    <citation type="journal article" date="1990" name="J. Clin. Invest.">
        <title>A missense mutation at codon 188 of the human lipoprotein lipase gene is a frequent cause of lipoprotein lipase deficiency in persons of different ancestries.</title>
        <authorList>
            <person name="Monsalve M.V."/>
            <person name="Henderson H."/>
            <person name="Roederer G."/>
            <person name="Julien P."/>
            <person name="Deeb S."/>
            <person name="Kastelein J.J.P."/>
            <person name="Peritz L."/>
            <person name="Devlin R."/>
            <person name="Bruin T."/>
            <person name="Murthy M.R.V."/>
            <person name="Gagne C."/>
            <person name="Davignon J."/>
            <person name="Lupien P.J."/>
            <person name="Brunzell J.D."/>
            <person name="Hayden M.R."/>
        </authorList>
    </citation>
    <scope>VARIANT HLPP1 GLU-215</scope>
</reference>
<reference key="31">
    <citation type="journal article" date="1990" name="Proc. Natl. Acad. Sci. U.S.A.">
        <title>Lipoprotein lipase Bethesda: a single amino acid substitution (Ala-176--&gt;Thr) leads to abnormal heparin binding and loss of enzymic activity.</title>
        <authorList>
            <person name="Beg O.U."/>
            <person name="Meng M.S."/>
            <person name="Skarlatos S.I."/>
            <person name="Previato L."/>
            <person name="Brunzell J.D."/>
            <person name="Brewer H.B. Jr."/>
            <person name="Fojo S.S."/>
        </authorList>
    </citation>
    <scope>VARIANT HLPP1 THR-203</scope>
</reference>
<reference key="32">
    <citation type="journal article" date="1991" name="J. Biol. Chem.">
        <title>Identification of two separate allelic mutations in the lipoprotein lipase gene of a patient with the familial hyperchylomicronemia syndrome.</title>
        <authorList>
            <person name="Dichek H.L."/>
            <person name="Fojo S.S."/>
            <person name="Beg O.U."/>
            <person name="Skarlatos S.I."/>
            <person name="Brunzell J.D."/>
            <person name="Cutler G.B. Jr."/>
            <person name="Brewer H.B. Jr."/>
        </authorList>
    </citation>
    <scope>VARIANTS HLPP1 THR-221 AND HIS-270</scope>
</reference>
<reference key="33">
    <citation type="journal article" date="1991" name="J. Biol. Chem.">
        <title>Catalytic triad residue mutation (Asp156--&gt;Gly) causing familial lipoprotein lipase deficiency. Co-inheritance with a nonsense mutation (Ser447--&gt;Ter) in a Turkish family.</title>
        <authorList>
            <person name="Faustinella F."/>
            <person name="Chang A."/>
            <person name="van Biervliet J.P."/>
            <person name="Rosseneu M."/>
            <person name="Vinaimont N."/>
            <person name="Smith L.C."/>
            <person name="Chen S.-H."/>
            <person name="Chan L."/>
        </authorList>
    </citation>
    <scope>VARIANT HLPP1 GLY-183</scope>
</reference>
<reference key="34">
    <citation type="journal article" date="1991" name="J. Clin. Invest.">
        <title>Familial chylomicronemia (type I hyperlipoproteinemia) due to a single missense mutation in the lipoprotein lipase gene.</title>
        <authorList>
            <person name="Ameis D."/>
            <person name="Kobayashi J."/>
            <person name="Davis R.C."/>
            <person name="Ben-Zeev O."/>
            <person name="Malloy M.J."/>
            <person name="Kane J.P."/>
            <person name="Lee G."/>
            <person name="Wong H."/>
            <person name="Havel R.J."/>
            <person name="Schotz M.C."/>
        </authorList>
    </citation>
    <scope>VARIANT HLPP1 GLU-169</scope>
</reference>
<reference key="35">
    <citation type="journal article" date="1991" name="J. Clin. Invest.">
        <title>Amino acid substitution (Ile194--&gt;Thr) in exon 5 of the lipoprotein lipase gene causes lipoprotein lipase deficiency in three unrelated probands. Support for a multicentric origin.</title>
        <authorList>
            <person name="Henderson H.E."/>
            <person name="Ma Y."/>
            <person name="Hassan F."/>
            <person name="Monsalve M.V."/>
            <person name="Marais A.D."/>
            <person name="Winkler F."/>
            <person name="Gubernator K."/>
            <person name="Peterson J."/>
            <person name="Brunzell J.D."/>
            <person name="Hayden M.R."/>
        </authorList>
    </citation>
    <scope>VARIANT HLPP1 THR-221</scope>
</reference>
<reference key="36">
    <citation type="journal article" date="1991" name="J. Clin. Invest.">
        <title>Heterogeneous mutations in the human lipoprotein lipase gene in patients with familial lipoprotein lipase deficiency.</title>
        <authorList>
            <person name="Gotoda T."/>
            <person name="Yamada N."/>
            <person name="Kawamura M."/>
            <person name="Kozaki K."/>
            <person name="Mori N."/>
            <person name="Ishibashi S."/>
            <person name="Shimano H."/>
            <person name="Takaku F."/>
            <person name="Yazaki Y."/>
            <person name="Furuichi Y."/>
            <person name="Murase T."/>
        </authorList>
    </citation>
    <scope>VARIANTS HLPP1 GLU-231 AND HIS-270</scope>
    <scope>CHARACTERIZATION OF VARIANTS HLPP1 GLU-231 AND HIS-270</scope>
</reference>
<reference key="37">
    <citation type="journal article" date="1991" name="N. Engl. J. Med.">
        <title>A mutation in the human lipoprotein lipase gene as the most common cause of familial chylomicronemia in French Canadians.</title>
        <authorList>
            <person name="Ma Y."/>
            <person name="Henderson H.E."/>
            <person name="Ven Murthy M.R."/>
            <person name="Roederer G."/>
            <person name="Monsalve M.V."/>
            <person name="Clarke L.A."/>
            <person name="Normand T."/>
            <person name="Julien P."/>
            <person name="Gagne C."/>
            <person name="Lambert M."/>
            <person name="Davignon J."/>
            <person name="Lupien P.J."/>
            <person name="Brunzell J."/>
            <person name="Hayden M.R."/>
        </authorList>
    </citation>
    <scope>VARIANT HLPP1 LEU-234</scope>
</reference>
<reference key="38">
    <citation type="journal article" date="1992" name="Am. J. Hum. Genet.">
        <title>A missense mutation (Trp86--&gt;Arg) in exon 3 of the lipoprotein lipase gene: a cause of familial chylomicronemia.</title>
        <authorList>
            <person name="Ishimura-Oka K."/>
            <person name="Faustinella F."/>
            <person name="Kihara S."/>
            <person name="Smith L.C."/>
            <person name="Oka K."/>
            <person name="Chan L."/>
        </authorList>
    </citation>
    <scope>VARIANT HLPP1 ARG-113</scope>
</reference>
<reference key="39">
    <citation type="journal article" date="1992" name="Eur. J. Biochem.">
        <title>A missense mutation Pro157Arg in lipoprotein lipase (LPLNijmegen) resulting in loss of catalytic activity.</title>
        <authorList>
            <person name="Bruin T."/>
            <person name="Kastelein J.J."/>
            <person name="van Diermen D.E."/>
            <person name="Ma Y."/>
            <person name="Henderson H.E."/>
            <person name="Stuyt P.M."/>
            <person name="Stalenhoef A.F.H."/>
            <person name="Sturk A."/>
            <person name="Brunzell J.D."/>
            <person name="Hayden M.R."/>
        </authorList>
    </citation>
    <scope>VARIANT HLPP1 ARG-184</scope>
</reference>
<reference key="40">
    <citation type="journal article" date="1992" name="Genomics">
        <title>A missense mutation (Asp250--&gt;Asn) in exon 6 of the human lipoprotein lipase gene causes chylomicronemia in patients of different ancestries.</title>
        <authorList>
            <person name="Ma Y."/>
            <person name="Wilson B.I."/>
            <person name="Bijvoet S."/>
            <person name="Henderson H.E."/>
            <person name="Cramb E."/>
            <person name="Roederer G."/>
            <person name="Ven Murthy M.R."/>
            <person name="Julien P."/>
            <person name="Bakker H.D."/>
            <person name="Kastelein J.J."/>
            <person name="Brunzell J.D."/>
            <person name="Hayden M.R."/>
        </authorList>
    </citation>
    <scope>VARIANT HLPP1 ASN-277</scope>
</reference>
<reference key="41">
    <citation type="journal article" date="1992" name="J. Biol. Chem.">
        <title>Two naturally occurring mutations at the first and second bases of codon aspartic acid 156 in the proposed catalytic triad of human lipoprotein lipase. In vivo evidence that aspartic acid 156 is essential for catalysis.</title>
        <authorList>
            <person name="Ma Y.H."/>
            <person name="Bruin T."/>
            <person name="Tuzgol S."/>
            <person name="Wilson B.I."/>
            <person name="Roederer G."/>
            <person name="Liu M.S."/>
            <person name="Davignon J."/>
            <person name="Kastelein J.J."/>
            <person name="Brunzell J.D."/>
            <person name="Hayden M.R."/>
        </authorList>
    </citation>
    <scope>VARIANTS HLPP1 ASN-183; GLY-183 AND SER-243</scope>
</reference>
<reference key="42">
    <citation type="journal article" date="1992" name="J. Biol. Chem.">
        <title>Human lipoprotein lipase. Analysis of the catalytic triad by site-directed mutagenesis of Ser-132, Asp-156, and His-241.</title>
        <authorList>
            <person name="Emmerich J."/>
            <person name="Beg O.U."/>
            <person name="Peterson J."/>
            <person name="Previato L."/>
            <person name="Brunzell J.D."/>
            <person name="Brewer H.B. Jr."/>
            <person name="Santamarina-Fojo S."/>
        </authorList>
    </citation>
    <scope>CHARACTERIZATION OF VARIANTS HLPP1 ASN-183 AND GLY-183</scope>
    <scope>MUTAGENESIS OF SER-159 AND HIS-268</scope>
    <scope>CATALYTIC ACTIVITY</scope>
    <scope>ACTIVE SITE</scope>
    <scope>SUBCELLULAR LOCATION</scope>
    <scope>HEPARIN-BINDING</scope>
</reference>
<reference key="43">
    <citation type="journal article" date="1992" name="J. Biol. Chem.">
        <title>Missense mutations in exon 5 of the human lipoprotein lipase gene. Inactivation correlates with loss of dimerization.</title>
        <authorList>
            <person name="Hata A."/>
            <person name="Ridinger D.N."/>
            <person name="Sutherland S.D."/>
            <person name="Emi M."/>
            <person name="Kwong L.K."/>
            <person name="Shuhua J."/>
            <person name="Lubbers A."/>
            <person name="Guy-Grand B."/>
            <person name="Basdevant A."/>
            <person name="Iverius P.H."/>
            <person name="Wilson D.E."/>
            <person name="Lalouel J.-M."/>
        </authorList>
    </citation>
    <scope>VARIANT HLPP1 GLU-222</scope>
</reference>
<reference key="44">
    <citation type="journal article" date="1992" name="J. Lipid Res.">
        <title>A missense (Asp250--&gt;Asn) mutation in the lipoprotein lipase gene in two unrelated families with familial lipoprotein lipase deficiency.</title>
        <authorList>
            <person name="Ishimura-Oka K."/>
            <person name="Semenkovich C.F."/>
            <person name="Faustinella F."/>
            <person name="Goldberg I.J."/>
            <person name="Shachter N."/>
            <person name="Smith L.C."/>
            <person name="Coleman T."/>
            <person name="Hide W.A."/>
            <person name="Brown W.V."/>
            <person name="Oka K."/>
        </authorList>
    </citation>
    <scope>VARIANTS HLPP1 GLU-215; HIS-270 AND ASN-277</scope>
</reference>
<reference key="45">
    <citation type="journal article" date="1992" name="J. Lipid Res.">
        <title>Molecular basis of familial chylomicronemia: mutations in the lipoprotein lipase and apolipoprotein C-II genes.</title>
        <authorList>
            <person name="Reina M."/>
            <person name="Brunzell J.D."/>
            <person name="Deeb S.S."/>
        </authorList>
    </citation>
    <scope>VARIANTS HLPP1 ARG-113; ARG-163; GLU-215; THR-221 AND SER-232</scope>
</reference>
<reference key="46">
    <citation type="journal article" date="1993" name="Biochem. Biophys. Res. Commun.">
        <title>A missense mutation (Ala334--&gt;Thr) in exon 7 of the lipoprotein lipase gene in a case with type I hyperlipidemia.</title>
        <authorList>
            <person name="Kobayashi J."/>
            <person name="Sasaki N."/>
            <person name="Tashiro J."/>
            <person name="Inadera H."/>
            <person name="Saito Y."/>
            <person name="Yoshida S."/>
        </authorList>
    </citation>
    <scope>VARIANT HLPP1 THR-361</scope>
</reference>
<reference key="47">
    <citation type="journal article" date="1993" name="Genomics">
        <title>A novel missense mutation in the gene for lipoprotein lipase resulting in a highly conservative amino acid substitution (Asp180--&gt;Glu) causes familial chylomicronemia (type I hyperlipoproteinemia).</title>
        <authorList>
            <person name="Haubenwallner S."/>
            <person name="Horl G."/>
            <person name="Shachter N.S."/>
            <person name="Presta E."/>
            <person name="Fried S.K."/>
            <person name="Hofler G."/>
            <person name="Kostner G.M."/>
            <person name="Breslow J.L."/>
            <person name="Zechner R."/>
        </authorList>
    </citation>
    <scope>VARIANT HLPP1 GLU-207</scope>
</reference>
<reference key="48">
    <citation type="journal article" date="1993" name="J. Clin. Invest.">
        <title>Gene-environment interaction in the conversion of a mild-to-severe phenotype in a patient homozygous for a Ser172--&gt;Cys mutation in the lipoprotein lipase gene.</title>
        <authorList>
            <person name="Ma Y."/>
            <person name="Liu M.-S."/>
            <person name="Ginzinger D."/>
            <person name="Frohlich J."/>
            <person name="Brunzell J.D."/>
            <person name="Hayden M.R."/>
        </authorList>
    </citation>
    <scope>VARIANT HLPP1 CYS-199</scope>
</reference>
<reference key="49">
    <citation type="journal article" date="1993" name="J. Clin. Invest.">
        <title>Mutations in exon 3 of the lipoprotein lipase gene segregating in a family with hypertriglyceridemia, pancreatitis, and non-insulin-dependent diabetes.</title>
        <authorList>
            <person name="Wilson D.E."/>
            <person name="Hata A."/>
            <person name="Kwong L.K."/>
            <person name="Lingam A."/>
            <person name="Shuhua J."/>
            <person name="Ridinger D.N."/>
            <person name="Yeager C."/>
            <person name="Kaltenborn K.C."/>
            <person name="Iverius P.-H."/>
            <person name="Lalouel J.-M."/>
        </authorList>
    </citation>
    <scope>VARIANT HLPP1 SER-102</scope>
</reference>
<reference key="50">
    <citation type="journal article" date="1993" name="J. Lipid Res.">
        <title>Recurrent pancreatitis and chylomicronemia in an extended Dutch kindred is caused by a Gly154--&gt;Ser substitution in lipoprotein lipase.</title>
        <authorList>
            <person name="Bruin T."/>
            <person name="Tuzgol S."/>
            <person name="van Diermen D.E."/>
            <person name="Hoogerbrugge-Van der Linden N."/>
            <person name="Brunzell J.D."/>
            <person name="Hayden M.R."/>
            <person name="Kastelein J.J."/>
        </authorList>
    </citation>
    <scope>VARIANT HLPP1 SER-181</scope>
</reference>
<reference key="51">
    <citation type="journal article" date="1994" name="Biochem. Biophys. Res. Commun.">
        <title>A new Italian case of lipoprotein lipase deficiency: a Leu365-&gt; Val change resulting in loss of enzyme activity.</title>
        <authorList>
            <person name="Chimienti G.P.G."/>
            <person name="Resta F."/>
            <person name="di Perma V."/>
            <person name="Tarricone C."/>
            <person name="Lovecchio M."/>
            <person name="Collacicco A.M."/>
            <person name="Capurso A."/>
        </authorList>
    </citation>
    <scope>VARIANT HLPP1 VAL-392</scope>
</reference>
<reference key="52">
    <citation type="journal article" date="1994" name="Biochem. Biophys. Res. Commun.">
        <title>A naturally occurring mutation at the second base of codon asparagine 43 in the proposed N-linked glycosylation site of human lipoprotein lipase: in vivo evidence that asparagine 43 is essential for catalysis and secretion.</title>
        <authorList>
            <person name="Kobayashi J."/>
            <person name="Inadera H."/>
            <person name="Fujita Y."/>
            <person name="Talley G."/>
            <person name="Morisaki N."/>
            <person name="Yoshida S."/>
            <person name="Saito Y."/>
            <person name="Fojo S.S."/>
            <person name="Brewer H.B. Jr."/>
        </authorList>
    </citation>
    <scope>VARIANT HLPP1 SER-70</scope>
    <scope>CHARACTERIZATION OF VARIANT HLPP1 SER-70</scope>
</reference>
<reference key="53">
    <citation type="journal article" date="1994" name="Hum. Mutat.">
        <title>Recurrent missense mutations at the first and second base of codon Arg243 in human lipoprotein lipase in patients of different ancestries.</title>
        <authorList>
            <person name="Ma Y."/>
            <person name="Liu M.-S."/>
            <person name="Chitayat D."/>
            <person name="Bruin T."/>
            <person name="Beisiegel U."/>
            <person name="Benlian P."/>
            <person name="Foubert L."/>
            <person name="De Gennes J.L."/>
            <person name="Funke H."/>
            <person name="Forsythe I."/>
            <person name="Blaichman S."/>
            <person name="Papanikolaou M."/>
            <person name="Erkelens D.W."/>
            <person name="Kastelein J."/>
            <person name="Brunzell J.D."/>
            <person name="Hayden M.R."/>
        </authorList>
    </citation>
    <scope>VARIANTS HLPP1 HIS-270 AND CYS-270</scope>
</reference>
<reference key="54">
    <citation type="journal article" date="1994" name="J. Lipid Res.">
        <title>A compound heterozygote for lipoprotein lipase deficiency, Val69--&gt;Leu and Gly188--&gt;Glu: correlation between in vitro LPL activity and clinical expression.</title>
        <authorList>
            <person name="Bruin T."/>
            <person name="Tuzgoel S."/>
            <person name="Mulder W.J."/>
            <person name="van den Ende A.E."/>
            <person name="Jansen H."/>
            <person name="Hayden M.R."/>
            <person name="Kastelein J.J.P."/>
        </authorList>
    </citation>
    <scope>VARIANTS HLPP1 LEU-96 AND GLU-215</scope>
    <scope>CHARACTERIZATION OF VARIANT HLPP1 LEU-96</scope>
</reference>
<reference key="55">
    <citation type="journal article" date="1994" name="J. Lipid Res.">
        <title>High frequency of mutations in the human lipoprotein lipase gene in pregnancy-induced chylomicronemia: possible association with apolipoprotein E2 isoform.</title>
        <authorList>
            <person name="Ma Y."/>
            <person name="Ooi T.C."/>
            <person name="Liu M.-S."/>
            <person name="Zhang H."/>
            <person name="McPherson R."/>
            <person name="Edwards A.L."/>
            <person name="Forsythe I.J."/>
            <person name="Frohlich J."/>
            <person name="Brunzell J.D."/>
            <person name="Hayden M.R."/>
        </authorList>
    </citation>
    <scope>VARIANTS HLPP1 CYS-199; ARG-279 AND THR-288</scope>
    <scope>CHARACTERIZATION OF VARIANTS HLPP1 ARG-279 AND THR-288</scope>
</reference>
<reference key="56">
    <citation type="journal article" date="1994" name="J. Lipid Res.">
        <title>A novel missense mutation in the C-terminal domain of lipoprotein lipase (Glu410--&gt;Val) leads to enzyme inactivation and familial chylomicronemia.</title>
        <authorList>
            <person name="Previato L."/>
            <person name="Guardamagna O."/>
            <person name="Dugi K.A."/>
            <person name="Ronan R."/>
            <person name="Talley G.D."/>
            <person name="Santamarina-Fojo S."/>
            <person name="Brewer H.B. Jr."/>
        </authorList>
    </citation>
    <scope>VARIANT HLPP1 VAL-437</scope>
</reference>
<reference key="57">
    <citation type="journal article" date="1995" name="Nat. Genet.">
        <title>A lipoprotein lipase mutation (Asn291Ser) is associated with reduced HDL cholesterol levels in premature atherosclerosis.</title>
        <authorList>
            <person name="Reymer P.W.A."/>
            <person name="Gagne E."/>
            <person name="Groenemeyer B.E."/>
            <person name="Zhang H."/>
            <person name="Forsyth I."/>
            <person name="Jansen H."/>
            <person name="Seidell J.C."/>
            <person name="Kromhout D."/>
            <person name="Lie K.E."/>
            <person name="Kastelein J.J."/>
            <person name="Hayden M.R."/>
        </authorList>
    </citation>
    <scope>VARIANT FCHL3 SER-318</scope>
</reference>
<reference key="58">
    <citation type="journal article" date="1996" name="Biochem. Biophys. Res. Commun.">
        <title>A new mutation destroying disulphide bridging in the C-terminal domain of lipoprotein lipase.</title>
        <authorList>
            <person name="Henderson H.E."/>
            <person name="Hassan F."/>
            <person name="Marais D."/>
            <person name="Hayden M.R."/>
        </authorList>
    </citation>
    <scope>VARIANT HLPP1 TYR-445</scope>
    <scope>CHARACTERIZATION OF VARIANT HLPP1 TYR-445</scope>
</reference>
<reference key="59">
    <citation type="journal article" date="1996" name="Eur. J. Clin. Invest.">
        <title>Lipoprotein lipase gene mutations D9N and N291S in four pedigrees with familial combined hyperlipidaemia.</title>
        <authorList>
            <person name="de Bruin T.W.A."/>
            <person name="Mailly F."/>
            <person name="van Barlingen H.H.J.J."/>
            <person name="Fisher R."/>
            <person name="Castro Cabezas M."/>
            <person name="Talmud P."/>
            <person name="Dallinga-Thie G.M."/>
            <person name="Humphries S.E."/>
        </authorList>
    </citation>
    <scope>VARIANTS ASN-36 AND SER-318</scope>
    <scope>INVOLVEMENT IN FCHL3</scope>
</reference>
<reference key="60">
    <citation type="journal article" date="1996" name="Hum. Mutat.">
        <title>Compound heterozygosity for a known (D250N) and a novel (E410K) missense mutation in the C-terminal domain of lipoprotein lipase causes familial chylomicronemia.</title>
        <authorList>
            <person name="Wiebusch H."/>
            <person name="Funke H."/>
            <person name="Bruin T."/>
            <person name="Bucher H."/>
            <person name="von Eckardstein A."/>
            <person name="Kastelein J.J.P."/>
            <person name="Assmann G."/>
        </authorList>
    </citation>
    <scope>VARIANTS HLPP1 ASN-277 AND LYS-437</scope>
</reference>
<reference key="61">
    <citation type="journal article" date="1996" name="Hum. Mutat.">
        <title>A novel missense (E163G) mutation in the catalytic subunit of lipoprotein lipase causes familial chylomicronemia.</title>
        <authorList>
            <person name="Wiebusch H."/>
            <person name="Funke H."/>
            <person name="Santer R."/>
            <person name="Richter W."/>
            <person name="Assmann G."/>
        </authorList>
    </citation>
    <scope>VARIANTS HLPP1 GLY-190 AND GLU-215</scope>
</reference>
<reference key="62">
    <citation type="journal article" date="1996" name="J. Lipid Res.">
        <title>Homozygosity for two point mutations in the lipoprotein lipase (LPL) gene in a patient with familial LPL deficiency: LPL(Asp9--&gt;Asn, Tyr262--&gt;His).</title>
        <authorList>
            <person name="Rouis M."/>
            <person name="Lohse P."/>
            <person name="Dugi K.A."/>
            <person name="Lohse P."/>
            <person name="Beg O.U."/>
            <person name="Ronan R."/>
            <person name="Talley G.D."/>
            <person name="Brunzell J.D."/>
            <person name="Santamarina-Fojo S."/>
        </authorList>
    </citation>
    <scope>VARIANT HLPP1 HIS-289</scope>
    <scope>VARIANT ASN-36</scope>
    <scope>CHARACTERIZATION OF VARIANT HLPP1 HIS-289</scope>
    <scope>CHARACTERIZATION OF VARIANT ASN-36</scope>
    <scope>INVOLVEMENT IN FCHL3</scope>
</reference>
<reference key="63">
    <citation type="journal article" date="1996" name="N. Engl. J. Med.">
        <title>Premature atherosclerosis in patients with familial chylomicronemia caused by mutations in the lipoprotein lipase gene.</title>
        <authorList>
            <person name="Benlian P."/>
            <person name="De Gennes J.L."/>
            <person name="Foubert L."/>
            <person name="Zhang H."/>
            <person name="Gagne S.E."/>
            <person name="Hayden M."/>
        </authorList>
    </citation>
    <scope>VARIANTS HLPP1 ALA-128; GLU-215; ARG-215; CYS-270; ASN-277 AND PRO-313</scope>
</reference>
<reference key="64">
    <citation type="journal article" date="1996" name="Neth. J. Med.">
        <title>Compound heterozygosity for a known and a novel defect in the lipoprotein lipase gene (Asp250--&gt;Asn; Ser251--&gt;Cys) resulting in lipoprotein lipase (LPL) deficiency.</title>
        <authorList>
            <person name="Bijvoet S.M."/>
            <person name="Wiebusch H."/>
            <person name="Ma Y."/>
            <person name="Reymer P.W."/>
            <person name="Bruin T."/>
            <person name="Bakker H.D."/>
            <person name="Funke H."/>
            <person name="Assmann G."/>
            <person name="Hayden M.R."/>
            <person name="Kastelein J.J."/>
        </authorList>
    </citation>
    <scope>VARIANT HLPP1 CYS-278</scope>
</reference>
<reference key="65">
    <citation type="journal article" date="1997" name="Hum. Mutat.">
        <title>A single Ser259Arg mutation in the gene for lipoprotein lipase causes chylomicronemia in Moroccans of Berber ancestry.</title>
        <authorList>
            <person name="Foubert L."/>
            <person name="Bruin T."/>
            <person name="de Gennes J.-L."/>
            <person name="Ehrenborg E."/>
            <person name="Furioli J."/>
            <person name="Kastelein J.J."/>
            <person name="Benlian P."/>
            <person name="Hayden M.R."/>
        </authorList>
    </citation>
    <scope>VARIANT HLPP1 ARG-286</scope>
</reference>
<reference key="66">
    <citation type="journal article" date="1997" name="Hum. Mutat.">
        <title>Familial lipoprotein lipase (LPL) deficiency: a catalogue of LPL gene mutations identified in 20 patients from the UK, Sweden, and Italy.</title>
        <authorList>
            <person name="Mailly F."/>
            <person name="Palmen J."/>
            <person name="Muller D.P.R."/>
            <person name="Gibbs T."/>
            <person name="Lloyd J."/>
            <person name="Brunzell J."/>
            <person name="Durrington P."/>
            <person name="Mitropoulos K."/>
            <person name="Betteridge J."/>
            <person name="Watts G."/>
            <person name="Lithell H."/>
            <person name="Angelico F."/>
            <person name="Humphries S.E."/>
            <person name="Talmud P.J."/>
        </authorList>
    </citation>
    <scope>VARIANTS HLPP1 GLY-113; THR-185; GLN-210; GLU-215; ARG-220; LEU-234; SER-318; THR-328 AND PRO-330</scope>
</reference>
<reference key="67">
    <citation type="journal article" date="1997" name="J. Med. Genet.">
        <title>Assessment of French patients with LPL deficiency for French Canadian mutations.</title>
        <authorList>
            <person name="Foubert L."/>
            <person name="De Gennes J.L."/>
            <person name="Lagarde J.P."/>
            <person name="Ehrenborg E."/>
            <person name="Raisonnier A."/>
            <person name="Girardet J.P."/>
            <person name="Hayden M.R."/>
            <person name="Benlian P."/>
        </authorList>
    </citation>
    <scope>VARIANTS HLPP1 ALA-128; HIS-183; GLU-215; ARG-215; LEU-234; CYS-270 AND ASN-277</scope>
</reference>
<reference key="68">
    <citation type="journal article" date="1998" name="Am. J. Med. Genet.">
        <title>Ile225Thr loop mutation in the lipoprotein lipase (LPL) gene is a de novo event.</title>
        <authorList>
            <person name="Henderson H.E."/>
            <person name="Bijvoet S.M."/>
            <person name="Mannens M.A.M.M."/>
            <person name="Bruin T."/>
            <person name="Erkelens D.W."/>
            <person name="Hayden M.R."/>
            <person name="Kastelein J.J.P."/>
        </authorList>
    </citation>
    <scope>VARIANTS HLPP1 THR-252 AND HIS-270</scope>
</reference>
<reference key="69">
    <citation type="journal article" date="1998" name="Clin. Chim. Acta">
        <title>A novel Glu421Lys substitution in the lipoprotein lipase gene in pregnancy-induced hypertriglyceridemic pancreatitis.</title>
        <authorList>
            <person name="Henderson H."/>
            <person name="Leisegang F."/>
            <person name="Hassan F."/>
            <person name="Hayden M."/>
            <person name="Marais D."/>
        </authorList>
    </citation>
    <scope>VARIANT HLPP1 LYS-448</scope>
    <scope>CHARACTERIZATION OF VARIANT HLPP1 LYS-448</scope>
</reference>
<reference key="70">
    <citation type="journal article" date="1998" name="Hum. Mutat.">
        <title>Compound heterozygosity for a new (S259G) and a previously described (G188E) mutation in lipoprotein lipase (LPL) as a cause of chylomicronemia.</title>
        <authorList>
            <person name="Evans D."/>
            <person name="Wendt D."/>
            <person name="Ahle S."/>
            <person name="Guerra A."/>
            <person name="Beisiegel U."/>
        </authorList>
    </citation>
    <scope>VARIANTS HLPP1 GLU-215 AND GLY-286</scope>
</reference>
<reference key="71">
    <citation type="journal article" date="1998" name="Mol. Genet. Metab.">
        <title>Common genetic variants of lipoprotein lipase and apolipoproteins AI-CIII that relate to coronary artery disease: a study in Chinese and European subjects.</title>
        <authorList>
            <person name="Zhang Q."/>
            <person name="Liu Y."/>
            <person name="Liu B.W."/>
            <person name="Fan P."/>
            <person name="Cavanna J."/>
            <person name="Galton D.J."/>
        </authorList>
    </citation>
    <scope>VARIANT HLPP1 THR-288</scope>
    <scope>VARIANTS ASN-36 AND SER-318</scope>
    <scope>INVOLVEMENT IN FCHL3</scope>
</reference>
<reference key="72">
    <citation type="journal article" date="1998" name="Nat. Genet.">
        <title>DNA sequence diversity in a 9.7-kb region of the human lipoprotein lipase gene.</title>
        <authorList>
            <person name="Nickerson D.A."/>
            <person name="Taylor S.L."/>
            <person name="Weiss K.M."/>
            <person name="Clark A.G."/>
            <person name="Hutchinson R.G."/>
            <person name="Stengaerd J."/>
            <person name="Salomaa V."/>
            <person name="Vartiainen E."/>
            <person name="Boerwinkle E."/>
            <person name="Sing C.F."/>
        </authorList>
    </citation>
    <scope>VARIANT FCHL3 SER-318</scope>
    <scope>VARIANTS MET-370 AND ALA-379</scope>
</reference>
<reference key="73">
    <citation type="journal article" date="1999" name="Nat. Genet.">
        <title>Characterization of single-nucleotide polymorphisms in coding regions of human genes.</title>
        <authorList>
            <person name="Cargill M."/>
            <person name="Altshuler D."/>
            <person name="Ireland J."/>
            <person name="Sklar P."/>
            <person name="Ardlie K."/>
            <person name="Patil N."/>
            <person name="Shaw N."/>
            <person name="Lane C.R."/>
            <person name="Lim E.P."/>
            <person name="Kalyanaraman N."/>
            <person name="Nemesh J."/>
            <person name="Ziaugra L."/>
            <person name="Friedland L."/>
            <person name="Rolfe A."/>
            <person name="Warrington J."/>
            <person name="Lipshutz R."/>
            <person name="Daley G.Q."/>
            <person name="Lander E.S."/>
        </authorList>
    </citation>
    <scope>VARIANT THR-427</scope>
</reference>
<reference key="74">
    <citation type="journal article" date="1999" name="Nat. Genet.">
        <authorList>
            <person name="Cargill M."/>
            <person name="Altshuler D."/>
            <person name="Ireland J."/>
            <person name="Sklar P."/>
            <person name="Ardlie K."/>
            <person name="Patil N."/>
            <person name="Shaw N."/>
            <person name="Lane C.R."/>
            <person name="Lim E.P."/>
            <person name="Kalyanaraman N."/>
            <person name="Nemesh J."/>
            <person name="Ziaugra L."/>
            <person name="Friedland L."/>
            <person name="Rolfe A."/>
            <person name="Warrington J."/>
            <person name="Lipshutz R."/>
            <person name="Daley G.Q."/>
            <person name="Lander E.S."/>
        </authorList>
    </citation>
    <scope>ERRATUM OF PUBMED:10391209</scope>
</reference>
<reference key="75">
    <citation type="journal article" date="2000" name="Biochim. Biophys. Acta">
        <title>A newly identified lipoprotein lipase (LPL) gene mutation (F270L) in a Japanese patient with familial LPL deficiency.</title>
        <authorList>
            <person name="Takagi A."/>
            <person name="Ikeda Y."/>
            <person name="Takeda E."/>
            <person name="Yamamoto A."/>
        </authorList>
    </citation>
    <scope>VARIANT HLPP1 LEU-297</scope>
    <scope>CHARACTERIZATION OF VARIANT HLPP1 LEU-297</scope>
</reference>
<reference key="76">
    <citation type="journal article" date="2000" name="Clin. Sci.">
        <title>A compound heterozygote for a novel missense mutation (G105R) in exon 3 and a missense mutation (D204E) in exon 5 of the lipoprotein lipase gene in a Japanese infant with hyperchylomicronaemia.</title>
        <authorList>
            <person name="Ikeda Y."/>
            <person name="Goji K."/>
            <person name="Takagi A."/>
        </authorList>
    </citation>
    <scope>VARIANTS HLPP1 ARG-132 AND GLU-231</scope>
    <scope>CHARACTERIZATION OF VARIANTS HLPP1 ARG-132 AND GLU-231</scope>
</reference>
<reference key="77">
    <citation type="journal article" date="2000" name="J. Clin. Endocrinol. Metab.">
        <title>Type I hyperlipoproteinemia due to a novel loss of function mutation of lipoprotein lipase, Cys(239)--&gt;Trp, associated with recurrent severe pancreatitis.</title>
        <authorList>
            <person name="Hoffmann M.M."/>
            <person name="Jacob S."/>
            <person name="Luft D."/>
            <person name="Schmuelling R.-M."/>
            <person name="Rett K."/>
            <person name="Maerz W."/>
            <person name="Haering H.-U."/>
            <person name="Matthaei S."/>
        </authorList>
    </citation>
    <scope>VARIANT HLPP1 TRP-266</scope>
</reference>
<reference key="78">
    <citation type="journal article" date="2000" name="J. Lipid Res.">
        <title>Two novel mutations in the lipoprotein lipase gene in a family with marked hypertriglyceridemia in heterozygous carriers. Potential interaction with the polymorphic marker D1S104 on chromosome 1q21-q23.</title>
        <authorList>
            <person name="Hoelzl B."/>
            <person name="Kraft H.G."/>
            <person name="Wiebusch H."/>
            <person name="Sandhofer A."/>
            <person name="Patsch J."/>
            <person name="Sandhofer F."/>
            <person name="Paulweber B."/>
        </authorList>
    </citation>
    <scope>VARIANT HLPP1 ASP-210</scope>
    <scope>CHARACTERIZATION OF VARIANT HLPP1 ASP-210</scope>
</reference>
<reference key="79">
    <citation type="journal article" date="2001" name="J. Lipid Res.">
        <title>Novel compound heterozygous mutations for lipoprotein lipase deficiency. A G-to-T transversion at the first position of exon 5 causing G154V missense mutation and a 5' splice site mutation of intron 8.</title>
        <authorList>
            <person name="Ikeda Y."/>
            <person name="Takagi A."/>
            <person name="Nakata Y."/>
            <person name="Sera Y."/>
            <person name="Hyoudou S."/>
            <person name="Hamamoto K."/>
            <person name="Nishi Y."/>
            <person name="Yamamoto A."/>
        </authorList>
    </citation>
    <scope>VARIANT HLPP1 VAL-181</scope>
    <scope>CHARACTERIZATION OF VARIANT HLPP1 VAL-181</scope>
</reference>
<reference key="80">
    <citation type="journal article" date="2002" name="Hum. Mutat.">
        <title>Genotype-phenotype studies of six novel LPL mutations in Chinese patients with hypertriglyceridemia.</title>
        <authorList>
            <person name="Chan L.Y.S."/>
            <person name="Lam C.-W."/>
            <person name="Mak Y.-T."/>
            <person name="Tomlinson B."/>
            <person name="Tsang M.-W."/>
            <person name="Baum L."/>
            <person name="Masarei J.R.L."/>
            <person name="Pang C.-P."/>
        </authorList>
    </citation>
    <scope>VARIANTS HLPP1 THR-98; ILE-208; VAL-279; ARG-279; TYR-310; ARG-325 AND PHE-365</scope>
    <scope>CHARACTERIZATION OF VARIANTS HLPP1 THR-98; ILE-208; VAL-279; ARG-279; TYR-310; ARG-325 AND PHE-365</scope>
</reference>
<reference key="81">
    <citation type="journal article" date="2002" name="J. Lipid Res.">
        <title>Structural and functional consequences of missense mutations in exon 5 of the lipoprotein lipase gene.</title>
        <authorList>
            <person name="Peterson J."/>
            <person name="Ayyobi A.F."/>
            <person name="Ma Y."/>
            <person name="Henderson H."/>
            <person name="Reina M."/>
            <person name="Deeb S.S."/>
            <person name="Santamarina-Fojo S."/>
            <person name="Hayden M.R."/>
            <person name="Brunzell J.D."/>
        </authorList>
    </citation>
    <scope>CHARACTERIZATION OF VARIANTS HLPP1 THR-203; GLU-215; THR-221; SER-232 AND LEU-234</scope>
    <scope>CATALYTIC ACTIVITY</scope>
    <scope>SUBUNIT</scope>
    <scope>SUBCELLULAR LOCATION</scope>
    <scope>TISSUE SPECIFICITY</scope>
</reference>
<reference key="82">
    <citation type="journal article" date="2003" name="Eur. J. Clin. Invest.">
        <title>Novel LPL mutation (L303F) found in a patient associated with coronary artery disease and severe systemic atherosclerosis.</title>
        <authorList>
            <person name="Saika Y."/>
            <person name="Sakai N."/>
            <person name="Takahashi M."/>
            <person name="Maruyama T."/>
            <person name="Kihara S."/>
            <person name="Ouchi N."/>
            <person name="Ishigami M."/>
            <person name="Hiraoka H."/>
            <person name="Nakamura T."/>
            <person name="Yamashita S."/>
            <person name="Matsuzawa Y."/>
        </authorList>
    </citation>
    <scope>VARIANT HLPP1 PHE-303</scope>
    <scope>CHARACTERIZATION OF VARIANT HLPP1 PHE-303</scope>
    <scope>SUBCELLULAR LOCATION</scope>
    <scope>TISSUE SPECIFICITY</scope>
</reference>
<reference key="83">
    <citation type="journal article" date="2003" name="Hum. Mol. Genet.">
        <title>Association of extreme blood lipid profile phenotypic variation with 11 reverse cholesterol transport genes and 10 non-genetic cardiovascular disease risk factors.</title>
        <authorList>
            <person name="Morabia A."/>
            <person name="Cayanis E."/>
            <person name="Costanza M.C."/>
            <person name="Ross B.M."/>
            <person name="Flaherty M.S."/>
            <person name="Alvin G.B."/>
            <person name="Das K."/>
            <person name="Gilliam T.C."/>
        </authorList>
    </citation>
    <scope>VARIANTS ASN-36 AND SER-318</scope>
    <scope>INVOLVEMENT IN FCHL3</scope>
</reference>
<reference key="84">
    <citation type="journal article" date="2004" name="Clin. Genet.">
        <title>Identification of the first Lebanese mutation in the LPL gene and description of a rapid detection method.</title>
        <authorList>
            <person name="Abifadel M."/>
            <person name="Jambart S."/>
            <person name="Allard D."/>
            <person name="Rabes J.-P."/>
            <person name="Varret M."/>
            <person name="Derre A."/>
            <person name="Chouery E."/>
            <person name="Salem N."/>
            <person name="Junien C."/>
            <person name="Aydenian H."/>
            <person name="Boileau C."/>
        </authorList>
    </citation>
    <scope>VARIANT HLPP1 VAL-201</scope>
</reference>
<reference key="85">
    <citation type="journal article" date="2004" name="Eur. J. Pediatr.">
        <title>Severe hypertriglyceridaemia in a Greek infant: a clinical, biochemical and genetic study.</title>
        <authorList>
            <person name="Kavazarakis E."/>
            <person name="Stabouli S."/>
            <person name="Gourgiotis D."/>
            <person name="Roumeliotou K."/>
            <person name="Traeger-Synodinos J."/>
            <person name="Bossios A."/>
            <person name="Fretzayas A."/>
            <person name="Kanavakis E."/>
        </authorList>
    </citation>
    <scope>VARIANTS HLPP1 GLU-215 AND ARG-328</scope>
</reference>
<reference key="86">
    <citation type="journal article" date="2004" name="J. Atheroscler. Thromb.">
        <title>Mutations in Japanese subjects with primary hyperlipidemia -- results from the Research Committee of the Ministry of Health and Welfare of Japan since 1996.</title>
        <authorList>
            <consortium name="The research committee on primary hyperlipidemia of the ministry of health and welfare of Japan"/>
            <person name="Maruyama T."/>
            <person name="Yamashita S."/>
            <person name="Matsuzawa Y."/>
            <person name="Bujo H."/>
            <person name="Takahashi K."/>
            <person name="Saito Y."/>
            <person name="Ishibashi S."/>
            <person name="Ohashi K."/>
            <person name="Shionoiri F."/>
            <person name="Gotoda T."/>
            <person name="Yamada N."/>
            <person name="Kita T."/>
        </authorList>
    </citation>
    <scope>VARIANTS HLPP1 SER-70; ARG-132; VAL-181; GLU-215; THR-221; ARG-225; ALA-227; GLU-231; CYS-270; HIS-270; THR-288; LEU-297; ARG-305; PHE-330 AND THR-361</scope>
</reference>
<reference key="87">
    <citation type="journal article" date="2005" name="J. Inherit. Metab. Dis.">
        <title>Hyperchylomicronaemia due to lipoprotein lipase deficiency as a cause of false-positive newborn screening for biotinidase deficiency.</title>
        <authorList>
            <person name="Santer R."/>
            <person name="Gokcay G."/>
            <person name="Demirkol M."/>
            <person name="Gal A."/>
            <person name="Lukacs Z."/>
        </authorList>
    </citation>
    <scope>VARIANTS HLPP1 GLU-186; GLU-215 AND THR-221</scope>
</reference>
<reference key="88">
    <citation type="journal article" date="2014" name="Clin. Chim. Acta">
        <title>Molecular analysis of chylomicronemia in a clinical laboratory setting: diagnosis of 13 cases of lipoprotein lipase deficiency.</title>
        <authorList>
            <person name="Martin-Campos J.M."/>
            <person name="Julve J."/>
            <person name="Roig R."/>
            <person name="Martinez S."/>
            <person name="Errico T.L."/>
            <person name="Martinez-Couselo S."/>
            <person name="Escola-Gil J.C."/>
            <person name="Mendez-Gonzalez J."/>
            <person name="Blanco-Vaca F."/>
        </authorList>
    </citation>
    <scope>VARIANT HLPP1 GLN-210</scope>
    <scope>CHARACTERIZATION OF VARIANT HLPP1 GLN-210</scope>
    <scope>SUBCELLULAR LOCATION</scope>
</reference>
<reference key="89">
    <citation type="journal article" date="2016" name="J. Clin. Lipidol.">
        <title>Identification and characterization of two novel mutations in the LPL gene causing type I hyperlipoproteinemia.</title>
        <authorList>
            <person name="Pingitore P."/>
            <person name="Lepore S.M."/>
            <person name="Pirazzi C."/>
            <person name="Mancina R.M."/>
            <person name="Motta B.M."/>
            <person name="Valenti L."/>
            <person name="Berge K.E."/>
            <person name="Retterstoel K."/>
            <person name="Leren T.P."/>
            <person name="Wiklund O."/>
            <person name="Romeo S."/>
        </authorList>
    </citation>
    <scope>VARIANT HLPP1 ARG-404</scope>
    <scope>CHARACTERIZATION OF VARIANT HLPP1 ARG-404</scope>
    <scope>FUNCTION</scope>
    <scope>CATALYTIC ACTIVITY</scope>
    <scope>SUBCELLULAR LOCATION</scope>
</reference>
<protein>
    <recommendedName>
        <fullName>Lipoprotein lipase</fullName>
        <shortName>LPL</shortName>
        <ecNumber evidence="10 13 17 44 49 53 54">3.1.1.34</ecNumber>
    </recommendedName>
    <alternativeName>
        <fullName>Phospholipase A1</fullName>
        <ecNumber evidence="13 54">3.1.1.32</ecNumber>
    </alternativeName>
</protein>
<name>LIPL_HUMAN</name>
<feature type="signal peptide" evidence="44">
    <location>
        <begin position="1"/>
        <end position="27"/>
    </location>
</feature>
<feature type="chain" id="PRO_0000017775" description="Lipoprotein lipase">
    <location>
        <begin position="28"/>
        <end position="475"/>
    </location>
</feature>
<feature type="domain" description="PLAT" evidence="3">
    <location>
        <begin position="341"/>
        <end position="464"/>
    </location>
</feature>
<feature type="region of interest" description="Interaction with GPIHBP1" evidence="53">
    <location>
        <begin position="32"/>
        <end position="53"/>
    </location>
</feature>
<feature type="region of interest" description="Essential for determining substrate specificity" evidence="54">
    <location>
        <begin position="243"/>
        <end position="266"/>
    </location>
</feature>
<feature type="region of interest" description="Important for interaction with lipoprotein particles" evidence="51">
    <location>
        <begin position="417"/>
        <end position="421"/>
    </location>
</feature>
<feature type="region of interest" description="Important for heparin binding" evidence="10">
    <location>
        <begin position="430"/>
        <end position="434"/>
    </location>
</feature>
<feature type="region of interest" description="Interaction with GPIHBP1" evidence="48 53">
    <location>
        <begin position="443"/>
        <end position="467"/>
    </location>
</feature>
<feature type="active site" description="Nucleophile" evidence="17 53">
    <location>
        <position position="159"/>
    </location>
</feature>
<feature type="active site" description="Charge relay system" evidence="17 85">
    <location>
        <position position="183"/>
    </location>
</feature>
<feature type="active site" description="Charge relay system" evidence="17 85">
    <location>
        <position position="268"/>
    </location>
</feature>
<feature type="binding site" evidence="85">
    <location>
        <position position="194"/>
    </location>
    <ligand>
        <name>Ca(2+)</name>
        <dbReference type="ChEBI" id="CHEBI:29108"/>
    </ligand>
</feature>
<feature type="binding site" evidence="85">
    <location>
        <position position="197"/>
    </location>
    <ligand>
        <name>Ca(2+)</name>
        <dbReference type="ChEBI" id="CHEBI:29108"/>
    </ligand>
</feature>
<feature type="binding site" evidence="85">
    <location>
        <position position="199"/>
    </location>
    <ligand>
        <name>Ca(2+)</name>
        <dbReference type="ChEBI" id="CHEBI:29108"/>
    </ligand>
</feature>
<feature type="binding site" evidence="85">
    <location>
        <position position="202"/>
    </location>
    <ligand>
        <name>Ca(2+)</name>
        <dbReference type="ChEBI" id="CHEBI:29108"/>
    </ligand>
</feature>
<feature type="modified residue" description="3'-nitrotyrosine" evidence="2">
    <location>
        <position position="121"/>
    </location>
</feature>
<feature type="modified residue" description="3'-nitrotyrosine" evidence="2">
    <location>
        <position position="191"/>
    </location>
</feature>
<feature type="modified residue" description="3'-nitrotyrosine" evidence="2">
    <location>
        <position position="343"/>
    </location>
</feature>
<feature type="glycosylation site" description="N-linked (GlcNAc...) asparagine" evidence="35 53 87">
    <location>
        <position position="70"/>
    </location>
</feature>
<feature type="glycosylation site" description="N-linked (GlcNAc...) asparagine" evidence="53 87">
    <location>
        <position position="386"/>
    </location>
</feature>
<feature type="disulfide bond" evidence="3 53 87">
    <location>
        <begin position="54"/>
        <end position="67"/>
    </location>
</feature>
<feature type="disulfide bond" evidence="3 53 87">
    <location>
        <begin position="243"/>
        <end position="266"/>
    </location>
</feature>
<feature type="disulfide bond" evidence="3 53 87">
    <location>
        <begin position="291"/>
        <end position="310"/>
    </location>
</feature>
<feature type="disulfide bond" evidence="3 53 87">
    <location>
        <begin position="302"/>
        <end position="305"/>
    </location>
</feature>
<feature type="disulfide bond" evidence="3 53 87">
    <location>
        <begin position="445"/>
        <end position="465"/>
    </location>
</feature>
<feature type="sequence variant" id="VAR_011948" description="Risk factor for FCHL3; has approximately 80% of the specific activity of wild-type enzyme; dbSNP:rs1801177." evidence="16 68 71 81">
    <original>D</original>
    <variation>N</variation>
    <location>
        <position position="36"/>
    </location>
</feature>
<feature type="sequence variant" id="VAR_057914" description="In HLPP1; produces an inactive protein which is not secreted into the media; dbSNP:rs2069901707." evidence="23 59">
    <original>N</original>
    <variation>S</variation>
    <location>
        <position position="70"/>
    </location>
</feature>
<feature type="sequence variant" id="VAR_049819" description="In dbSNP:rs11542065.">
    <original>H</original>
    <variation>Q</variation>
    <location>
        <position position="71"/>
    </location>
</feature>
<feature type="sequence variant" id="VAR_057915" description="In HLPP1; gives rise to a 80% decrease in specific catalytic activity; dbSNP:rs373088068." evidence="58">
    <original>V</original>
    <variation>L</variation>
    <location>
        <position position="96"/>
    </location>
</feature>
<feature type="sequence variant" id="VAR_057916" description="In HLPP1; decreases the specific activity of the enzyme; reduces the secretion of the mutant protein significantly; the total LPL mass is reduced compared to that of the wild-type construct; dbSNP:rs145657341." evidence="14">
    <original>A</original>
    <variation>T</variation>
    <location>
        <position position="98"/>
    </location>
</feature>
<feature type="sequence variant" id="VAR_004211" description="In HLPP1; dbSNP:rs118204073." evidence="65">
    <original>R</original>
    <variation>S</variation>
    <location>
        <position position="102"/>
    </location>
</feature>
<feature type="sequence variant" id="VAR_004212" description="In HLPP1." evidence="77">
    <original>W</original>
    <variation>G</variation>
    <location>
        <position position="113"/>
    </location>
</feature>
<feature type="sequence variant" id="VAR_004213" description="In HLPP1; dbSNP:rs118204069." evidence="19 26">
    <original>W</original>
    <variation>R</variation>
    <location>
        <position position="113"/>
    </location>
</feature>
<feature type="sequence variant" id="VAR_057917" description="In HLPP1." evidence="69 75">
    <original>T</original>
    <variation>A</variation>
    <location>
        <position position="128"/>
    </location>
</feature>
<feature type="sequence variant" id="VAR_057918" description="In HLPP1; synthesized as a catalytically inactive form." evidence="8 23">
    <original>G</original>
    <variation>R</variation>
    <location>
        <position position="132"/>
    </location>
</feature>
<feature type="sequence variant" id="VAR_004214" description="In HLPP1." evidence="19">
    <original>H</original>
    <variation>R</variation>
    <location>
        <position position="163"/>
    </location>
</feature>
<feature type="sequence variant" id="VAR_004215" description="In HLPP1; loss of activity; dbSNP:rs118204063." evidence="39">
    <original>G</original>
    <variation>E</variation>
    <location>
        <position position="169"/>
    </location>
</feature>
<feature type="sequence variant" id="VAR_004216" description="In HLPP1; dbSNP:rs747009924." evidence="64">
    <original>G</original>
    <variation>S</variation>
    <location>
        <position position="181"/>
    </location>
</feature>
<feature type="sequence variant" id="VAR_057919" description="In HLPP1; synthesized as a catalytically inactive form." evidence="11 23">
    <original>G</original>
    <variation>V</variation>
    <location>
        <position position="181"/>
    </location>
</feature>
<feature type="sequence variant" id="VAR_004217" description="In HLPP1; lacks both triolein and tributyrin esterase activities; dbSNP:rs118204064." evidence="17 32 36">
    <original>D</original>
    <variation>G</variation>
    <location>
        <position position="183"/>
    </location>
</feature>
<feature type="sequence variant" id="VAR_057920" description="In HLPP1; dbSNP:rs781614031." evidence="75">
    <original>D</original>
    <variation>H</variation>
    <location>
        <position position="183"/>
    </location>
</feature>
<feature type="sequence variant" id="VAR_004218" description="In HLPP1; lacks both triolein and tributyrin esterase activities; dbSNP:rs781614031." evidence="17 32">
    <original>D</original>
    <variation>N</variation>
    <location>
        <position position="183"/>
    </location>
</feature>
<feature type="sequence variant" id="VAR_004219" description="In HLPP1; Nijmegen; loss of activity." evidence="22">
    <original>P</original>
    <variation>R</variation>
    <location>
        <position position="184"/>
    </location>
</feature>
<feature type="sequence variant" id="VAR_004220" description="In HLPP1; 3.2% of activity; dbSNP:rs748349562." evidence="77">
    <original>A</original>
    <variation>T</variation>
    <location>
        <position position="185"/>
    </location>
</feature>
<feature type="sequence variant" id="VAR_057921" description="In HLPP1." evidence="25">
    <original>G</original>
    <variation>E</variation>
    <location>
        <position position="186"/>
    </location>
</feature>
<feature type="sequence variant" id="VAR_057922" description="In HLPP1." evidence="73">
    <original>E</original>
    <variation>G</variation>
    <location>
        <position position="190"/>
    </location>
</feature>
<feature type="sequence variant" id="VAR_004221" description="In HLPP1; mild hypertriglyceridemia; partial activity; dbSNP:rs118204072." evidence="60 66">
    <original>S</original>
    <variation>C</variation>
    <location>
        <position position="199"/>
    </location>
</feature>
<feature type="sequence variant" id="VAR_057923" description="In HLPP1; almost complete loss of enzyme activity; dbSNP:rs2069961955." evidence="20 53">
    <original>D</original>
    <variation>V</variation>
    <location>
        <position position="201"/>
    </location>
</feature>
<feature type="sequence variant" id="VAR_004222" description="In HLPP1; Bethesda; loss of activity and abnormal heparin binding; dbSNP:rs118204056." evidence="12 41">
    <original>A</original>
    <variation>T</variation>
    <location>
        <position position="203"/>
    </location>
</feature>
<feature type="sequence variant" id="VAR_004223" description="In HLPP1; dbSNP:rs118204076." evidence="63">
    <original>D</original>
    <variation>E</variation>
    <location>
        <position position="207"/>
    </location>
</feature>
<feature type="sequence variant" id="VAR_057924" description="In HLPP1; decreases the specific activity of the enzyme; has a mild effect on the secretion of the mutant enzyme; the total LPL mass is reduced compared to that of the wild-type construct; dbSNP:rs568397156." evidence="14">
    <original>V</original>
    <variation>I</variation>
    <location>
        <position position="208"/>
    </location>
</feature>
<feature type="sequence variant" id="VAR_057925" description="In HLPP1; complete loss of enzyme activity." evidence="6">
    <original>H</original>
    <variation>D</variation>
    <location>
        <position position="210"/>
    </location>
</feature>
<feature type="sequence variant" id="VAR_004224" description="In HLPP1; severely decreased lipoprotein lipase activity; decreased secretion." evidence="45 77">
    <original>H</original>
    <variation>Q</variation>
    <location>
        <position position="210"/>
    </location>
</feature>
<feature type="sequence variant" id="VAR_004225" description="In HLPP1; loss of activity; dbSNP:rs118204057." evidence="5 12 19 21 23 25 28 37 38 58 69 73 75 77">
    <original>G</original>
    <variation>E</variation>
    <location>
        <position position="215"/>
    </location>
</feature>
<feature type="sequence variant" id="VAR_057926" description="In HLPP1." evidence="69 75">
    <original>G</original>
    <variation>R</variation>
    <location>
        <position position="215"/>
    </location>
</feature>
<feature type="sequence variant" id="VAR_004226" description="In HLPP1; 2.0% of activity; dbSNP:rs757546424." evidence="77">
    <original>S</original>
    <variation>R</variation>
    <location>
        <position position="220"/>
    </location>
</feature>
<feature type="sequence variant" id="VAR_004227" description="In HLPP1; loss of activity; dbSNP:rs118204061." evidence="12 19 23 25 30 31">
    <original>I</original>
    <variation>T</variation>
    <location>
        <position position="221"/>
    </location>
</feature>
<feature type="sequence variant" id="VAR_004228" description="In HLPP1; dbSNP:rs118204075." evidence="18">
    <original>G</original>
    <variation>E</variation>
    <location>
        <position position="222"/>
    </location>
</feature>
<feature type="sequence variant" id="VAR_057927" description="In HLPP1." evidence="23">
    <original>K</original>
    <variation>R</variation>
    <location>
        <position position="225"/>
    </location>
</feature>
<feature type="sequence variant" id="VAR_057928" description="In HLPP1; dbSNP:rs528243561." evidence="23">
    <original>V</original>
    <variation>A</variation>
    <location>
        <position position="227"/>
    </location>
</feature>
<feature type="sequence variant" id="VAR_004229" description="In HLPP1; loss of activity; dbSNP:rs118204067." evidence="8 23 33">
    <original>D</original>
    <variation>E</variation>
    <location>
        <position position="231"/>
    </location>
</feature>
<feature type="sequence variant" id="VAR_004230" description="In HLPP1; loss of activity; dbSNP:rs770601263." evidence="12 19">
    <original>I</original>
    <variation>S</variation>
    <location>
        <position position="232"/>
    </location>
</feature>
<feature type="sequence variant" id="VAR_004231" description="In HLPP1; loss of activity; dbSNP:rs118204060." evidence="12 40 75 77">
    <original>P</original>
    <variation>L</variation>
    <location>
        <position position="234"/>
    </location>
</feature>
<feature type="sequence variant" id="VAR_004232" description="In HLPP1; loss of activity; dbSNP:rs2069963510." evidence="32">
    <original>C</original>
    <variation>S</variation>
    <location>
        <position position="243"/>
    </location>
</feature>
<feature type="sequence variant" id="VAR_057929" description="In HLPP1; dbSNP:rs118204080." evidence="80">
    <original>I</original>
    <variation>T</variation>
    <location>
        <position position="252"/>
    </location>
</feature>
<feature type="sequence variant" id="VAR_057930" description="In HLPP1; dbSNP:rs118204082." evidence="9">
    <original>C</original>
    <variation>W</variation>
    <location>
        <position position="266"/>
    </location>
</feature>
<feature type="sequence variant" id="VAR_057931" description="In HLPP1; dbSNP:rs118204077." evidence="23 57 69 75">
    <original>R</original>
    <variation>C</variation>
    <location>
        <position position="270"/>
    </location>
</feature>
<feature type="sequence variant" id="VAR_004233" description="In HLPP1; loss of activity; dbSNP:rs118204062." evidence="23 28 31 33 57 80">
    <original>R</original>
    <variation>H</variation>
    <location>
        <position position="270"/>
    </location>
</feature>
<feature type="sequence variant" id="VAR_004234" description="In HLPP1; dbSNP:rs118204059." evidence="42">
    <original>S</original>
    <variation>T</variation>
    <location>
        <position position="271"/>
    </location>
</feature>
<feature type="sequence variant" id="VAR_004235" description="In HLPP1; 5% of full activity; dbSNP:rs118204068." evidence="28 29 69 72 75">
    <original>D</original>
    <variation>N</variation>
    <location>
        <position position="277"/>
    </location>
</feature>
<feature type="sequence variant" id="VAR_004236" description="In HLPP1." evidence="74">
    <original>S</original>
    <variation>C</variation>
    <location>
        <position position="278"/>
    </location>
</feature>
<feature type="sequence variant" id="VAR_057932" description="In HLPP1; decreases the specific activity of the enzyme; the total LPL mass is reduced compared to that of the wild-type construct; dbSNP:rs35414700." evidence="14 60">
    <original>L</original>
    <variation>R</variation>
    <location>
        <position position="279"/>
    </location>
</feature>
<feature type="sequence variant" id="VAR_057933" description="In HLPP1; decreases the specific activity of the enzyme; the total LPL mass is reduced compared to that of the wild-type construct; dbSNP:rs371282890." evidence="14">
    <original>L</original>
    <variation>V</variation>
    <location>
        <position position="279"/>
    </location>
</feature>
<feature type="sequence variant" id="VAR_004237" description="In HLPP1." evidence="5">
    <original>S</original>
    <variation>G</variation>
    <location>
        <position position="286"/>
    </location>
</feature>
<feature type="sequence variant" id="VAR_004238" description="In HLPP1." evidence="76">
    <original>S</original>
    <variation>R</variation>
    <location>
        <position position="286"/>
    </location>
</feature>
<feature type="sequence variant" id="VAR_011949" description="In HLPP1; the LPL mass level is approximately 67% of the normal; the activity is 32% of the nornal; dbSNP:rs1800011." evidence="23 60 81">
    <original>A</original>
    <variation>T</variation>
    <location>
        <position position="288"/>
    </location>
</feature>
<feature type="sequence variant" id="VAR_057934" description="In HLPP1; no enzyme activity; dbSNP:rs1161884343." evidence="68">
    <original>Y</original>
    <variation>H</variation>
    <location>
        <position position="289"/>
    </location>
</feature>
<feature type="sequence variant" id="VAR_057935" description="In HLPP1 and hyperlipidemia; synthesized as a catalytically inactive form; total amount is almost equal to that of the normal enzyme; non-releasable by heparin due to the abnormal structure of the mutant protein." evidence="7 23">
    <original>F</original>
    <variation>L</variation>
    <location>
        <position position="297"/>
    </location>
</feature>
<feature type="sequence variant" id="VAR_057936" description="In HLPP1; approximately 6% of normal LPL activity and 40% of LPL mass are detected in the patient's postheparin plasma; results in the production of a functionally inactive enzyme." evidence="15">
    <original>L</original>
    <variation>F</variation>
    <location>
        <position position="303"/>
    </location>
</feature>
<feature type="sequence variant" id="VAR_057937" description="In HLPP1; dbSNP:rs773235712." evidence="23">
    <original>C</original>
    <variation>R</variation>
    <location>
        <position position="305"/>
    </location>
</feature>
<feature type="sequence variant" id="VAR_057938" description="In HLPP1; decreases the specific activity of the enzyme; reduces the secretion of the mutant protein significantly; the total LPL mass is reduced compared to that of the wild-type construct; dbSNP:rs1409123950." evidence="14">
    <original>C</original>
    <variation>Y</variation>
    <location>
        <position position="310"/>
    </location>
</feature>
<feature type="sequence variant" id="VAR_057939" description="In HLPP1." evidence="69">
    <original>L</original>
    <variation>P</variation>
    <location>
        <position position="313"/>
    </location>
</feature>
<feature type="sequence variant" id="VAR_004239" description="In HLPP1; risk factor for FCHL3; loss of activity; dbSNP:rs268." evidence="16 24 55 71 77 79 81 82">
    <original>N</original>
    <variation>S</variation>
    <location>
        <position position="318"/>
    </location>
</feature>
<feature type="sequence variant" id="VAR_057940" description="In HLPP1; has no effect on the specific activity of the enzyme; has a mild effect on the secretion of the mutant enzyme; the total LPL mass is reduced compared to that of the wild-type construct; dbSNP:rs761265900." evidence="14">
    <original>S</original>
    <variation>R</variation>
    <location>
        <position position="325"/>
    </location>
</feature>
<feature type="sequence variant" id="VAR_057941" description="In HLPP1." evidence="21">
    <original>M</original>
    <variation>R</variation>
    <location>
        <position position="328"/>
    </location>
</feature>
<feature type="sequence variant" id="VAR_004240" description="In HLPP1; dbSNP:rs1181582051." evidence="77">
    <original>M</original>
    <variation>T</variation>
    <location>
        <position position="328"/>
    </location>
</feature>
<feature type="sequence variant" id="VAR_057942" description="In HLPP1." evidence="23">
    <original>L</original>
    <variation>F</variation>
    <location>
        <position position="330"/>
    </location>
</feature>
<feature type="sequence variant" id="VAR_004241" description="In HLPP1." evidence="77">
    <original>L</original>
    <variation>P</variation>
    <location>
        <position position="330"/>
    </location>
</feature>
<feature type="sequence variant" id="VAR_004242" description="In HLPP1; dbSNP:rs118204071." evidence="23 61">
    <original>A</original>
    <variation>T</variation>
    <location>
        <position position="361"/>
    </location>
</feature>
<feature type="sequence variant" id="VAR_057943" description="In HLPP1; increases the specific activity of the enzyme; has a mild effect on the secretion of the mutant enzyme; the total LPL mass is reduced compared to that of the wild-type construct; dbSNP:rs546542623." evidence="14">
    <original>S</original>
    <variation>F</variation>
    <location>
        <position position="365"/>
    </location>
</feature>
<feature type="sequence variant" id="VAR_011950" description="In dbSNP:rs298." evidence="79">
    <original>V</original>
    <variation>M</variation>
    <location>
        <position position="370"/>
    </location>
</feature>
<feature type="sequence variant" id="VAR_011951" description="In dbSNP:rs300." evidence="79">
    <original>T</original>
    <variation>A</variation>
    <location>
        <position position="379"/>
    </location>
</feature>
<feature type="sequence variant" id="VAR_004243" description="In HLPP1; loss of activity; dbSNP:rs118204078." evidence="62">
    <original>L</original>
    <variation>V</variation>
    <location>
        <position position="392"/>
    </location>
</feature>
<feature type="sequence variant" id="VAR_077541" description="In HLPP1; decreased protein secretion; loss of interaction with GPIHBP1; decreased lipoprotein lipase activity." evidence="49 53">
    <original>M</original>
    <variation>R</variation>
    <location>
        <position position="404"/>
    </location>
</feature>
<feature type="sequence variant" id="VAR_004244" description="In HLPP1; affects the protein folding.">
    <location>
        <begin position="423"/>
        <end position="424"/>
    </location>
</feature>
<feature type="sequence variant" id="VAR_011952" description="In dbSNP:rs5934." evidence="4">
    <original>A</original>
    <variation>T</variation>
    <location>
        <position position="427"/>
    </location>
</feature>
<feature type="sequence variant" id="VAR_004245" description="In HLPP1; dbSNP:rs2070034219." evidence="72">
    <original>E</original>
    <variation>K</variation>
    <location>
        <position position="437"/>
    </location>
</feature>
<feature type="sequence variant" id="VAR_004246" description="In HLPP1." evidence="56">
    <original>E</original>
    <variation>V</variation>
    <location>
        <position position="437"/>
    </location>
</feature>
<feature type="sequence variant" id="VAR_057944" description="In HLPP1; has 48% of normal activity in vitro; decreased levels of activity account for by the lower protein mass levels of the mutants rather than by decreased enzymatic activities; loss of interaction with GPIHBP1; dbSNP:rs118204079." evidence="48 53 70">
    <original>C</original>
    <variation>Y</variation>
    <location>
        <position position="445"/>
    </location>
</feature>
<feature type="sequence variant" id="VAR_057945" description="In HLPP1; results in a moderate reduction in catalytic activity; dbSNP:rs149089920." evidence="78">
    <original>E</original>
    <variation>K</variation>
    <location>
        <position position="448"/>
    </location>
</feature>
<feature type="mutagenesis site" description="Loss of enzyme activity with triolein and tributyrin." evidence="17 53">
    <original>S</original>
    <variation>G</variation>
    <location>
        <position position="159"/>
    </location>
</feature>
<feature type="mutagenesis site" description="Loss of enzyme activity with triolein and tributyrin." evidence="17">
    <original>S</original>
    <variation>T</variation>
    <location>
        <position position="159"/>
    </location>
</feature>
<feature type="mutagenesis site" description="Loss of enzyme activity with triolein and tributyrin." evidence="17">
    <original>D</original>
    <variation>G</variation>
    <variation>N</variation>
    <location>
        <position position="183"/>
    </location>
</feature>
<feature type="mutagenesis site" description="Loss of enzyme activity." evidence="17">
    <original>S</original>
    <variation>G</variation>
    <location>
        <position position="199"/>
    </location>
</feature>
<feature type="mutagenesis site" description="No effect on enzyme activity." evidence="53">
    <original>D</original>
    <variation>E</variation>
    <location>
        <position position="201"/>
    </location>
</feature>
<feature type="mutagenesis site" description="Loss of enzyme activity." evidence="53">
    <original>D</original>
    <variation>E</variation>
    <location>
        <position position="202"/>
    </location>
</feature>
<feature type="mutagenesis site" description="Reduced triglyceride hydrolase activity and increased phospholipase activity." evidence="54">
    <original>NIGEAIRVIAERGLGDVDQLV</original>
    <variation>HFLELYRHIAQHGFNAITQTI</variation>
    <location>
        <begin position="244"/>
        <end position="264"/>
    </location>
</feature>
<feature type="mutagenesis site" description="Loss of both triglyceride hydrolase and phospholipase activity." evidence="54">
    <original>IGEAIRVIAERGLGDVDQL</original>
    <variation>GIAEIRVIEARGGLDVDLQ</variation>
    <location>
        <begin position="245"/>
        <end position="263"/>
    </location>
</feature>
<feature type="mutagenesis site" description="Loss of triglyceride hydrolase activity while phospholipase activity remains intact." evidence="54">
    <original>IGEA</original>
    <variation>GIAE</variation>
    <location>
        <begin position="245"/>
        <end position="248"/>
    </location>
</feature>
<feature type="mutagenesis site" description="Loss of triglyceride hydrolase activity while phospholipase activity remains intact." evidence="54">
    <original>QL</original>
    <variation>LQ</variation>
    <location>
        <begin position="262"/>
        <end position="263"/>
    </location>
</feature>
<feature type="mutagenesis site" description="Loss of enzyme activity with triolein and tributyrin." evidence="17">
    <original>H</original>
    <variation>G</variation>
    <location>
        <position position="268"/>
    </location>
</feature>
<feature type="mutagenesis site" description="Loss of enzyme activity with triolein and tributyrin." evidence="17">
    <original>H</original>
    <variation>Q</variation>
    <location>
        <position position="268"/>
    </location>
</feature>
<feature type="mutagenesis site" description="Loss of interaction with lipoprotein particles, but no effect on interaction with GPIHBP1; when associated with 420-A-A-421." evidence="46">
    <original>W</original>
    <variation>A</variation>
    <location>
        <position position="417"/>
    </location>
</feature>
<feature type="mutagenesis site" description="Loss of interaction with lipoprotein particles, but no effect on interaction with GPIHBP1; when associated with A-417." evidence="46">
    <original>WW</original>
    <variation>AA</variation>
    <location>
        <begin position="420"/>
        <end position="421"/>
    </location>
</feature>
<feature type="mutagenesis site" description="Impaired heparin-binding; when associated with N-432 and N-437." evidence="10">
    <original>K</original>
    <variation>N</variation>
    <location>
        <position position="430"/>
    </location>
</feature>
<feature type="mutagenesis site" description="Impaired heparin-binding; when associated with N-430 and N-437." evidence="10">
    <original>R</original>
    <variation>N</variation>
    <location>
        <position position="432"/>
    </location>
</feature>
<feature type="mutagenesis site" description="Impaired heparin-binding; when associated with N-430 and N-432." evidence="10">
    <original>K</original>
    <variation>N</variation>
    <location>
        <position position="434"/>
    </location>
</feature>
<feature type="helix" evidence="89">
    <location>
        <begin position="31"/>
        <end position="34"/>
    </location>
</feature>
<feature type="strand" evidence="89">
    <location>
        <begin position="40"/>
        <end position="44"/>
    </location>
</feature>
<feature type="strand" evidence="89">
    <location>
        <begin position="54"/>
        <end position="56"/>
    </location>
</feature>
<feature type="helix" evidence="89">
    <location>
        <begin position="61"/>
        <end position="66"/>
    </location>
</feature>
<feature type="strand" evidence="90">
    <location>
        <begin position="71"/>
        <end position="73"/>
    </location>
</feature>
<feature type="strand" evidence="89">
    <location>
        <begin position="75"/>
        <end position="79"/>
    </location>
</feature>
<feature type="strand" evidence="88">
    <location>
        <begin position="84"/>
        <end position="87"/>
    </location>
</feature>
<feature type="helix" evidence="89">
    <location>
        <begin position="91"/>
        <end position="102"/>
    </location>
</feature>
<feature type="strand" evidence="89">
    <location>
        <begin position="106"/>
        <end position="112"/>
    </location>
</feature>
<feature type="helix" evidence="89">
    <location>
        <begin position="114"/>
        <end position="117"/>
    </location>
</feature>
<feature type="helix" evidence="89">
    <location>
        <begin position="121"/>
        <end position="124"/>
    </location>
</feature>
<feature type="turn" evidence="89">
    <location>
        <begin position="125"/>
        <end position="127"/>
    </location>
</feature>
<feature type="helix" evidence="89">
    <location>
        <begin position="128"/>
        <end position="146"/>
    </location>
</feature>
<feature type="helix" evidence="89">
    <location>
        <begin position="150"/>
        <end position="152"/>
    </location>
</feature>
<feature type="strand" evidence="89">
    <location>
        <begin position="153"/>
        <end position="158"/>
    </location>
</feature>
<feature type="helix" evidence="89">
    <location>
        <begin position="160"/>
        <end position="169"/>
    </location>
</feature>
<feature type="strand" evidence="89">
    <location>
        <begin position="172"/>
        <end position="174"/>
    </location>
</feature>
<feature type="strand" evidence="89">
    <location>
        <begin position="176"/>
        <end position="183"/>
    </location>
</feature>
<feature type="turn" evidence="89">
    <location>
        <begin position="187"/>
        <end position="189"/>
    </location>
</feature>
<feature type="helix" evidence="89">
    <location>
        <begin position="194"/>
        <end position="196"/>
    </location>
</feature>
<feature type="helix" evidence="89">
    <location>
        <begin position="200"/>
        <end position="202"/>
    </location>
</feature>
<feature type="strand" evidence="89">
    <location>
        <begin position="203"/>
        <end position="209"/>
    </location>
</feature>
<feature type="strand" evidence="89">
    <location>
        <begin position="219"/>
        <end position="222"/>
    </location>
</feature>
<feature type="strand" evidence="89">
    <location>
        <begin position="228"/>
        <end position="234"/>
    </location>
</feature>
<feature type="turn" evidence="89">
    <location>
        <begin position="235"/>
        <end position="238"/>
    </location>
</feature>
<feature type="turn" evidence="90">
    <location>
        <begin position="241"/>
        <end position="243"/>
    </location>
</feature>
<feature type="helix" evidence="90">
    <location>
        <begin position="247"/>
        <end position="253"/>
    </location>
</feature>
<feature type="helix" evidence="89">
    <location>
        <begin position="262"/>
        <end position="280"/>
    </location>
</feature>
<feature type="strand" evidence="89">
    <location>
        <begin position="282"/>
        <end position="284"/>
    </location>
</feature>
<feature type="strand" evidence="89">
    <location>
        <begin position="287"/>
        <end position="290"/>
    </location>
</feature>
<feature type="helix" evidence="89">
    <location>
        <begin position="294"/>
        <end position="298"/>
    </location>
</feature>
<feature type="strand" evidence="89">
    <location>
        <begin position="308"/>
        <end position="314"/>
    </location>
</feature>
<feature type="strand" evidence="89">
    <location>
        <begin position="326"/>
        <end position="330"/>
    </location>
</feature>
<feature type="strand" evidence="89">
    <location>
        <begin position="334"/>
        <end position="337"/>
    </location>
</feature>
<feature type="strand" evidence="89">
    <location>
        <begin position="341"/>
        <end position="350"/>
    </location>
</feature>
<feature type="strand" evidence="89">
    <location>
        <begin position="356"/>
        <end position="370"/>
    </location>
</feature>
<feature type="strand" evidence="89">
    <location>
        <begin position="372"/>
        <end position="384"/>
    </location>
</feature>
<feature type="strand" evidence="89">
    <location>
        <begin position="387"/>
        <end position="397"/>
    </location>
</feature>
<feature type="strand" evidence="89">
    <location>
        <begin position="401"/>
        <end position="409"/>
    </location>
</feature>
<feature type="helix" evidence="91">
    <location>
        <begin position="417"/>
        <end position="421"/>
    </location>
</feature>
<feature type="strand" evidence="89">
    <location>
        <begin position="425"/>
        <end position="428"/>
    </location>
</feature>
<feature type="strand" evidence="89">
    <location>
        <begin position="430"/>
        <end position="435"/>
    </location>
</feature>
<feature type="turn" evidence="89">
    <location>
        <begin position="436"/>
        <end position="439"/>
    </location>
</feature>
<feature type="strand" evidence="89">
    <location>
        <begin position="440"/>
        <end position="454"/>
    </location>
</feature>
<feature type="strand" evidence="89">
    <location>
        <begin position="460"/>
        <end position="469"/>
    </location>
</feature>
<keyword id="KW-0002">3D-structure</keyword>
<keyword id="KW-0106">Calcium</keyword>
<keyword id="KW-1003">Cell membrane</keyword>
<keyword id="KW-0162">Chylomicron</keyword>
<keyword id="KW-0903">Direct protein sequencing</keyword>
<keyword id="KW-0225">Disease variant</keyword>
<keyword id="KW-1015">Disulfide bond</keyword>
<keyword id="KW-0272">Extracellular matrix</keyword>
<keyword id="KW-0325">Glycoprotein</keyword>
<keyword id="KW-0358">Heparin-binding</keyword>
<keyword id="KW-0378">Hydrolase</keyword>
<keyword id="KW-0380">Hyperlipidemia</keyword>
<keyword id="KW-0442">Lipid degradation</keyword>
<keyword id="KW-0443">Lipid metabolism</keyword>
<keyword id="KW-0472">Membrane</keyword>
<keyword id="KW-0479">Metal-binding</keyword>
<keyword id="KW-0944">Nitration</keyword>
<keyword id="KW-1267">Proteomics identification</keyword>
<keyword id="KW-1185">Reference proteome</keyword>
<keyword id="KW-0964">Secreted</keyword>
<keyword id="KW-0732">Signal</keyword>
<keyword id="KW-0850">VLDL</keyword>
<evidence type="ECO:0000250" key="1">
    <source>
        <dbReference type="UniProtKB" id="P11151"/>
    </source>
</evidence>
<evidence type="ECO:0000250" key="2">
    <source>
        <dbReference type="UniProtKB" id="Q06000"/>
    </source>
</evidence>
<evidence type="ECO:0000255" key="3">
    <source>
        <dbReference type="PROSITE-ProRule" id="PRU00152"/>
    </source>
</evidence>
<evidence type="ECO:0000269" key="4">
    <source>
    </source>
</evidence>
<evidence type="ECO:0000269" key="5">
    <source>
    </source>
</evidence>
<evidence type="ECO:0000269" key="6">
    <source>
    </source>
</evidence>
<evidence type="ECO:0000269" key="7">
    <source>
    </source>
</evidence>
<evidence type="ECO:0000269" key="8">
    <source>
    </source>
</evidence>
<evidence type="ECO:0000269" key="9">
    <source>
    </source>
</evidence>
<evidence type="ECO:0000269" key="10">
    <source>
    </source>
</evidence>
<evidence type="ECO:0000269" key="11">
    <source>
    </source>
</evidence>
<evidence type="ECO:0000269" key="12">
    <source>
    </source>
</evidence>
<evidence type="ECO:0000269" key="13">
    <source>
    </source>
</evidence>
<evidence type="ECO:0000269" key="14">
    <source>
    </source>
</evidence>
<evidence type="ECO:0000269" key="15">
    <source>
    </source>
</evidence>
<evidence type="ECO:0000269" key="16">
    <source>
    </source>
</evidence>
<evidence type="ECO:0000269" key="17">
    <source>
    </source>
</evidence>
<evidence type="ECO:0000269" key="18">
    <source>
    </source>
</evidence>
<evidence type="ECO:0000269" key="19">
    <source>
    </source>
</evidence>
<evidence type="ECO:0000269" key="20">
    <source>
    </source>
</evidence>
<evidence type="ECO:0000269" key="21">
    <source>
    </source>
</evidence>
<evidence type="ECO:0000269" key="22">
    <source>
    </source>
</evidence>
<evidence type="ECO:0000269" key="23">
    <source>
    </source>
</evidence>
<evidence type="ECO:0000269" key="24">
    <source>
    </source>
</evidence>
<evidence type="ECO:0000269" key="25">
    <source>
    </source>
</evidence>
<evidence type="ECO:0000269" key="26">
    <source>
    </source>
</evidence>
<evidence type="ECO:0000269" key="27">
    <source>
    </source>
</evidence>
<evidence type="ECO:0000269" key="28">
    <source>
    </source>
</evidence>
<evidence type="ECO:0000269" key="29">
    <source>
    </source>
</evidence>
<evidence type="ECO:0000269" key="30">
    <source>
    </source>
</evidence>
<evidence type="ECO:0000269" key="31">
    <source>
    </source>
</evidence>
<evidence type="ECO:0000269" key="32">
    <source>
    </source>
</evidence>
<evidence type="ECO:0000269" key="33">
    <source>
    </source>
</evidence>
<evidence type="ECO:0000269" key="34">
    <source>
    </source>
</evidence>
<evidence type="ECO:0000269" key="35">
    <source>
    </source>
</evidence>
<evidence type="ECO:0000269" key="36">
    <source>
    </source>
</evidence>
<evidence type="ECO:0000269" key="37">
    <source>
    </source>
</evidence>
<evidence type="ECO:0000269" key="38">
    <source>
    </source>
</evidence>
<evidence type="ECO:0000269" key="39">
    <source>
    </source>
</evidence>
<evidence type="ECO:0000269" key="40">
    <source>
    </source>
</evidence>
<evidence type="ECO:0000269" key="41">
    <source>
    </source>
</evidence>
<evidence type="ECO:0000269" key="42">
    <source>
    </source>
</evidence>
<evidence type="ECO:0000269" key="43">
    <source>
    </source>
</evidence>
<evidence type="ECO:0000269" key="44">
    <source>
    </source>
</evidence>
<evidence type="ECO:0000269" key="45">
    <source>
    </source>
</evidence>
<evidence type="ECO:0000269" key="46">
    <source>
    </source>
</evidence>
<evidence type="ECO:0000269" key="47">
    <source>
    </source>
</evidence>
<evidence type="ECO:0000269" key="48">
    <source>
    </source>
</evidence>
<evidence type="ECO:0000269" key="49">
    <source>
    </source>
</evidence>
<evidence type="ECO:0000269" key="50">
    <source>
    </source>
</evidence>
<evidence type="ECO:0000269" key="51">
    <source>
    </source>
</evidence>
<evidence type="ECO:0000269" key="52">
    <source>
    </source>
</evidence>
<evidence type="ECO:0000269" key="53">
    <source>
    </source>
</evidence>
<evidence type="ECO:0000269" key="54">
    <source>
    </source>
</evidence>
<evidence type="ECO:0000269" key="55">
    <source>
    </source>
</evidence>
<evidence type="ECO:0000269" key="56">
    <source>
    </source>
</evidence>
<evidence type="ECO:0000269" key="57">
    <source>
    </source>
</evidence>
<evidence type="ECO:0000269" key="58">
    <source>
    </source>
</evidence>
<evidence type="ECO:0000269" key="59">
    <source>
    </source>
</evidence>
<evidence type="ECO:0000269" key="60">
    <source>
    </source>
</evidence>
<evidence type="ECO:0000269" key="61">
    <source>
    </source>
</evidence>
<evidence type="ECO:0000269" key="62">
    <source>
    </source>
</evidence>
<evidence type="ECO:0000269" key="63">
    <source>
    </source>
</evidence>
<evidence type="ECO:0000269" key="64">
    <source>
    </source>
</evidence>
<evidence type="ECO:0000269" key="65">
    <source>
    </source>
</evidence>
<evidence type="ECO:0000269" key="66">
    <source>
    </source>
</evidence>
<evidence type="ECO:0000269" key="67">
    <source>
    </source>
</evidence>
<evidence type="ECO:0000269" key="68">
    <source>
    </source>
</evidence>
<evidence type="ECO:0000269" key="69">
    <source>
    </source>
</evidence>
<evidence type="ECO:0000269" key="70">
    <source>
    </source>
</evidence>
<evidence type="ECO:0000269" key="71">
    <source>
    </source>
</evidence>
<evidence type="ECO:0000269" key="72">
    <source>
    </source>
</evidence>
<evidence type="ECO:0000269" key="73">
    <source>
    </source>
</evidence>
<evidence type="ECO:0000269" key="74">
    <source>
    </source>
</evidence>
<evidence type="ECO:0000269" key="75">
    <source>
    </source>
</evidence>
<evidence type="ECO:0000269" key="76">
    <source>
    </source>
</evidence>
<evidence type="ECO:0000269" key="77">
    <source>
    </source>
</evidence>
<evidence type="ECO:0000269" key="78">
    <source>
    </source>
</evidence>
<evidence type="ECO:0000269" key="79">
    <source>
    </source>
</evidence>
<evidence type="ECO:0000269" key="80">
    <source>
    </source>
</evidence>
<evidence type="ECO:0000269" key="81">
    <source>
    </source>
</evidence>
<evidence type="ECO:0000269" key="82">
    <source ref="5"/>
</evidence>
<evidence type="ECO:0000305" key="83"/>
<evidence type="ECO:0000305" key="84">
    <source>
    </source>
</evidence>
<evidence type="ECO:0000305" key="85">
    <source>
    </source>
</evidence>
<evidence type="ECO:0000305" key="86">
    <source>
    </source>
</evidence>
<evidence type="ECO:0007744" key="87">
    <source>
        <dbReference type="PDB" id="6E7K"/>
    </source>
</evidence>
<evidence type="ECO:0007829" key="88">
    <source>
        <dbReference type="PDB" id="6E7K"/>
    </source>
</evidence>
<evidence type="ECO:0007829" key="89">
    <source>
        <dbReference type="PDB" id="6OAU"/>
    </source>
</evidence>
<evidence type="ECO:0007829" key="90">
    <source>
        <dbReference type="PDB" id="6OB0"/>
    </source>
</evidence>
<evidence type="ECO:0007829" key="91">
    <source>
        <dbReference type="PDB" id="6WN4"/>
    </source>
</evidence>
<comment type="function">
    <text evidence="10 13 46 49 50 54 67">Key enzyme in triglyceride metabolism. Catalyzes the hydrolysis of triglycerides from circulating chylomicrons and very low density lipoproteins (VLDL), and thereby plays an important role in lipid clearance from the blood stream, lipid utilization and storage (PubMed:11342582, PubMed:27578112, PubMed:8675619). Although it has both phospholipase and triglyceride lipase activities it is primarily a triglyceride lipase with low but detectable phospholipase activity (PubMed:12032167, PubMed:7592706). Mediates margination of triglyceride-rich lipoprotein particles in capillaries (PubMed:24726386). Recruited to its site of action on the luminal surface of vascular endothelium by binding to GPIHBP1 and cell surface heparan sulfate proteoglycans (PubMed:11342582, PubMed:27811232).</text>
</comment>
<comment type="catalytic activity">
    <reaction evidence="10 12 13 17 27 44 48 49 52 53 54">
        <text>a triacylglycerol + H2O = a diacylglycerol + a fatty acid + H(+)</text>
        <dbReference type="Rhea" id="RHEA:12044"/>
        <dbReference type="ChEBI" id="CHEBI:15377"/>
        <dbReference type="ChEBI" id="CHEBI:15378"/>
        <dbReference type="ChEBI" id="CHEBI:17855"/>
        <dbReference type="ChEBI" id="CHEBI:18035"/>
        <dbReference type="ChEBI" id="CHEBI:28868"/>
        <dbReference type="EC" id="3.1.1.34"/>
    </reaction>
</comment>
<comment type="catalytic activity">
    <reaction evidence="13 54">
        <text>a 1,2-diacyl-sn-glycero-3-phosphocholine + H2O = a 2-acyl-sn-glycero-3-phosphocholine + a fatty acid + H(+)</text>
        <dbReference type="Rhea" id="RHEA:18689"/>
        <dbReference type="ChEBI" id="CHEBI:15377"/>
        <dbReference type="ChEBI" id="CHEBI:15378"/>
        <dbReference type="ChEBI" id="CHEBI:28868"/>
        <dbReference type="ChEBI" id="CHEBI:57643"/>
        <dbReference type="ChEBI" id="CHEBI:57875"/>
        <dbReference type="EC" id="3.1.1.32"/>
    </reaction>
</comment>
<comment type="catalytic activity">
    <reaction evidence="13">
        <text>1,2,3-tri-(9Z-octadecenoyl)-glycerol + H2O = di-(9Z)-octadecenoylglycerol + (9Z)-octadecenoate + H(+)</text>
        <dbReference type="Rhea" id="RHEA:38575"/>
        <dbReference type="ChEBI" id="CHEBI:15377"/>
        <dbReference type="ChEBI" id="CHEBI:15378"/>
        <dbReference type="ChEBI" id="CHEBI:30823"/>
        <dbReference type="ChEBI" id="CHEBI:53753"/>
        <dbReference type="ChEBI" id="CHEBI:75945"/>
    </reaction>
    <physiologicalReaction direction="left-to-right" evidence="84">
        <dbReference type="Rhea" id="RHEA:38576"/>
    </physiologicalReaction>
</comment>
<comment type="catalytic activity">
    <reaction evidence="54">
        <text>1,2-di-(9Z-octadecenoyl)-sn-glycero-3-phosphocholine + H2O = (9Z-octadecenoyl)-sn-glycero-3-phosphocholine + (9Z)-octadecenoate + H(+)</text>
        <dbReference type="Rhea" id="RHEA:38699"/>
        <dbReference type="ChEBI" id="CHEBI:15377"/>
        <dbReference type="ChEBI" id="CHEBI:15378"/>
        <dbReference type="ChEBI" id="CHEBI:30823"/>
        <dbReference type="ChEBI" id="CHEBI:74669"/>
        <dbReference type="ChEBI" id="CHEBI:76083"/>
    </reaction>
    <physiologicalReaction direction="left-to-right" evidence="86">
        <dbReference type="Rhea" id="RHEA:38700"/>
    </physiologicalReaction>
</comment>
<comment type="catalytic activity">
    <reaction evidence="54">
        <text>1,2,3-tributanoylglycerol + H2O = dibutanoylglycerol + butanoate + H(+)</text>
        <dbReference type="Rhea" id="RHEA:40475"/>
        <dbReference type="ChEBI" id="CHEBI:15377"/>
        <dbReference type="ChEBI" id="CHEBI:15378"/>
        <dbReference type="ChEBI" id="CHEBI:17968"/>
        <dbReference type="ChEBI" id="CHEBI:35020"/>
        <dbReference type="ChEBI" id="CHEBI:76478"/>
    </reaction>
    <physiologicalReaction direction="left-to-right" evidence="86">
        <dbReference type="Rhea" id="RHEA:40476"/>
    </physiologicalReaction>
</comment>
<comment type="catalytic activity">
    <reaction evidence="13">
        <text>1,2-dihexadecanoyl-sn-glycero-3-phosphocholine + H2O = hexadecanoyl-sn-glycero-3-phosphocholine + hexadecanoate + H(+)</text>
        <dbReference type="Rhea" id="RHEA:41384"/>
        <dbReference type="ChEBI" id="CHEBI:7896"/>
        <dbReference type="ChEBI" id="CHEBI:15377"/>
        <dbReference type="ChEBI" id="CHEBI:15378"/>
        <dbReference type="ChEBI" id="CHEBI:64563"/>
        <dbReference type="ChEBI" id="CHEBI:72999"/>
    </reaction>
    <physiologicalReaction direction="left-to-right" evidence="84">
        <dbReference type="Rhea" id="RHEA:41385"/>
    </physiologicalReaction>
</comment>
<comment type="activity regulation">
    <text evidence="13 27 51 52">The apolipoprotein APOC2 acts as a coactivator of LPL activity (PubMed:12032167). Ca(2+) binding promotes protein stability and formation of the active homodimer (PubMed:16179346). Interaction with GPIHBP1 protects LPL against inactivation by ANGPTL4 (PubMed:27929370, PubMed:29899144). Inhibited by NaCl (PubMed:12032167).</text>
</comment>
<comment type="subunit">
    <text evidence="1 10 12 27 34 43 47 48 50 51 52 53 85">Homodimer (Probable) (PubMed:11893776, PubMed:16179346, PubMed:26725083). Interacts with GPIHBP1 with 1:1 stoichiometry (PubMed:17997385, PubMed:26725083, PubMed:27811232, PubMed:27929370, PubMed:29899144, PubMed:30559189). Interacts with APOC2; the interaction activates LPL activity in the presence of lipids (By similarity). Interaction with heparan sulfate proteoglycans is required to protect LPL against loss of activity (PubMed:11342582). Associates with lipoprotein particles in blood plasma (PubMed:11342582, PubMed:11893776). Interacts with LMF1 and SEL1L; interaction with SEL1L is required to prevent aggregation of newly synthesized LPL in the endoplasmic reticulum (ER), and for normal export of LPL from the ER to the extracellular space (PubMed:25066055). Interacts with SORL1; SORL1 acts as a sorting receptor, promoting LPL localization to endosomes and later to lysosomes, leading to degradation of newly synthesized LPL (PubMed:21385844).</text>
</comment>
<comment type="interaction">
    <interactant intactId="EBI-715909">
        <id>P06858</id>
    </interactant>
    <interactant intactId="EBI-2340132">
        <id>Q9UI10</id>
        <label>EIF2B4</label>
    </interactant>
    <organismsDiffer>false</organismsDiffer>
    <experiments>3</experiments>
</comment>
<comment type="interaction">
    <interactant intactId="EBI-715909">
        <id>P06858</id>
    </interactant>
    <interactant intactId="EBI-9080234">
        <id>Q8IV16</id>
        <label>GPIHBP1</label>
    </interactant>
    <organismsDiffer>false</organismsDiffer>
    <experiments>7</experiments>
</comment>
<comment type="interaction">
    <interactant intactId="EBI-715909">
        <id>P06858</id>
    </interactant>
    <interactant intactId="EBI-744871">
        <id>O00746</id>
        <label>NME4</label>
    </interactant>
    <organismsDiffer>false</organismsDiffer>
    <experiments>3</experiments>
</comment>
<comment type="interaction">
    <interactant intactId="EBI-715909">
        <id>P06858</id>
    </interactant>
    <interactant intactId="EBI-25830675">
        <id>C9J082</id>
        <label>NPHP1</label>
    </interactant>
    <organismsDiffer>false</organismsDiffer>
    <experiments>3</experiments>
</comment>
<comment type="interaction">
    <interactant intactId="EBI-715909">
        <id>P06858</id>
    </interactant>
    <interactant intactId="EBI-351098">
        <id>O14744</id>
        <label>PRMT5</label>
    </interactant>
    <organismsDiffer>false</organismsDiffer>
    <experiments>3</experiments>
</comment>
<comment type="interaction">
    <interactant intactId="EBI-715909">
        <id>P06858</id>
    </interactant>
    <interactant intactId="EBI-10272071">
        <id>Q8TAS3</id>
        <label>PRRG2</label>
    </interactant>
    <organismsDiffer>false</organismsDiffer>
    <experiments>3</experiments>
</comment>
<comment type="interaction">
    <interactant intactId="EBI-715909">
        <id>P06858</id>
    </interactant>
    <interactant intactId="EBI-750973">
        <id>O00233</id>
        <label>PSMD9</label>
    </interactant>
    <organismsDiffer>false</organismsDiffer>
    <experiments>3</experiments>
</comment>
<comment type="interaction">
    <interactant intactId="EBI-715909">
        <id>P06858</id>
    </interactant>
    <interactant intactId="EBI-2822550">
        <id>Q8IYM2</id>
        <label>SLFN12</label>
    </interactant>
    <organismsDiffer>false</organismsDiffer>
    <experiments>3</experiments>
</comment>
<comment type="interaction">
    <interactant intactId="EBI-715909">
        <id>P06858</id>
    </interactant>
    <interactant intactId="EBI-1752602">
        <id>Q9UMY4</id>
        <label>SNX12</label>
    </interactant>
    <organismsDiffer>false</organismsDiffer>
    <experiments>3</experiments>
</comment>
<comment type="interaction">
    <interactant intactId="EBI-715909">
        <id>P06858</id>
    </interactant>
    <interactant intactId="EBI-25830716">
        <id>O43493-5</id>
        <label>TGOLN2</label>
    </interactant>
    <organismsDiffer>false</organismsDiffer>
    <experiments>3</experiments>
</comment>
<comment type="interaction">
    <interactant intactId="EBI-715909">
        <id>P06858</id>
    </interactant>
    <interactant intactId="EBI-21757569">
        <id>Q8NFB2</id>
        <label>TMEM185A</label>
    </interactant>
    <organismsDiffer>false</organismsDiffer>
    <experiments>3</experiments>
</comment>
<comment type="interaction">
    <interactant intactId="EBI-715909">
        <id>P06858</id>
    </interactant>
    <interactant intactId="EBI-11337915">
        <id>Q8N0U8</id>
        <label>VKORC1L1</label>
    </interactant>
    <organismsDiffer>false</organismsDiffer>
    <experiments>3</experiments>
</comment>
<comment type="subcellular location">
    <subcellularLocation>
        <location evidence="1">Cell membrane</location>
        <topology evidence="1">Peripheral membrane protein</topology>
        <orientation evidence="1">Extracellular side</orientation>
    </subcellularLocation>
    <subcellularLocation>
        <location evidence="10 12 15 17 44 45 49 53">Secreted</location>
    </subcellularLocation>
    <subcellularLocation>
        <location evidence="50">Secreted</location>
        <location evidence="50">Extracellular space</location>
        <location evidence="50">Extracellular matrix</location>
    </subcellularLocation>
    <text evidence="1 50">Newly synthesized LPL binds to cell surface heparan proteoglycans and is then released by heparanase. Subsequently, it becomes attached to heparan proteoglycan on endothelial cells (PubMed:27811232). Locates to the plasma membrane of microvilli of hepatocytes with triglyceride-rich lipoproteins (TRL). Some of the bound LPL is then internalized and located inside non-coated endocytic vesicles (By similarity).</text>
</comment>
<comment type="tissue specificity">
    <text evidence="12 15 44">Detected in blood plasma (PubMed:11893776, PubMed:12641539, PubMed:2340307). Detected in milk (at protein level) (PubMed:2340307).</text>
</comment>
<comment type="PTM">
    <text evidence="2">Tyrosine nitration after lipopolysaccharide (LPS) challenge down-regulates the lipase activity.</text>
</comment>
<comment type="disease" evidence="5 6 7 8 9 11 12 14 15 17 18 19 20 21 22 23 25 26 28 29 30 31 32 33 36 37 38 39 40 41 42 45 48 49 53 56 57 58 59 60 61 62 63 64 65 66 68 69 70 72 73 74 75 76 77 78 80 81">
    <disease id="DI-01911">
        <name>Hyperlipoproteinemia 1</name>
        <acronym>HLPP1</acronym>
        <description>An autosomal recessive metabolic disorder characterized by defective breakdown of dietary fats, impaired clearance of chylomicrons from plasma causing the plasma to have a milky appearance, and severe hypertriglyceridemia. On a normal diet, patients often present with abdominal pain, hepatosplenomegaly, lipemia retinalis, eruptive xanthomata, and massive hypertriglyceridemia, sometimes complicated with acute pancreatitis.</description>
        <dbReference type="MIM" id="238600"/>
    </disease>
    <text>The disease is caused by variants affecting the gene represented in this entry.</text>
</comment>
<comment type="disease" evidence="16 55 68 71 79 81">
    <disease id="DI-05232">
        <name>Hyperlipidemia, familial combined, 3</name>
        <acronym>FCHL3</acronym>
        <description>A disorder characterized by a variable pattern of elevated levels of serum total cholesterol, triglycerides or both. It is observed in a percentage of individuals with premature coronary heart disease. FCHL3 inheritance is autosomal dominant.</description>
        <dbReference type="MIM" id="144250"/>
    </disease>
    <text>Disease susceptibility is associated with variants affecting the gene represented in this entry.</text>
</comment>
<comment type="similarity">
    <text evidence="83">Belongs to the AB hydrolase superfamily. Lipase family.</text>
</comment>
<comment type="online information" name="Wikipedia">
    <link uri="https://en.wikipedia.org/wiki/Lipoprotein_lipase"/>
    <text>Lipoprotein lipase entry</text>
</comment>
<sequence>MESKALLVLTLAVWLQSLTASRGGVAAADQRRDFIDIESKFALRTPEDTAEDTCHLIPGVAESVATCHFNHSSKTFMVIHGWTVTGMYESWVPKLVAALYKREPDSNVIVVDWLSRAQEHYPVSAGYTKLVGQDVARFINWMEEEFNYPLDNVHLLGYSLGAHAAGIAGSLTNKKVNRITGLDPAGPNFEYAEAPSRLSPDDADFVDVLHTFTRGSPGRSIGIQKPVGHVDIYPNGGTFQPGCNIGEAIRVIAERGLGDVDQLVKCSHERSIHLFIDSLLNEENPSKAYRCSSKEAFEKGLCLSCRKNRCNNLGYEINKVRAKRSSKMYLKTRSQMPYKVFHYQVKIHFSGTESETHTNQAFEISLYGTVAESENIPFTLPEVSTNKTYSFLIYTEVDIGELLMLKLKWKSDSYFSWSDWWSSPGFAIQKIRVKAGETQKKVIFCSREKVSHLQKGKAPAVFVKCHDKSLNKKSG</sequence>
<dbReference type="EC" id="3.1.1.34" evidence="10 13 17 44 49 53 54"/>
<dbReference type="EC" id="3.1.1.32" evidence="13 54"/>
<dbReference type="EMBL" id="M15856">
    <property type="protein sequence ID" value="AAB59536.1"/>
    <property type="molecule type" value="mRNA"/>
</dbReference>
<dbReference type="EMBL" id="X14390">
    <property type="protein sequence ID" value="CAA32564.1"/>
    <property type="molecule type" value="mRNA"/>
</dbReference>
<dbReference type="EMBL" id="X54516">
    <property type="protein sequence ID" value="CAA38372.1"/>
    <property type="molecule type" value="mRNA"/>
</dbReference>
<dbReference type="EMBL" id="M76722">
    <property type="protein sequence ID" value="AAA59528.1"/>
    <property type="molecule type" value="Genomic_DNA"/>
</dbReference>
<dbReference type="EMBL" id="S76076">
    <property type="protein sequence ID" value="AAB21000.1"/>
    <property type="molecule type" value="Genomic_DNA"/>
</dbReference>
<dbReference type="EMBL" id="S76077">
    <property type="protein sequence ID" value="AAB20999.1"/>
    <property type="molecule type" value="Genomic_DNA"/>
</dbReference>
<dbReference type="EMBL" id="BT006726">
    <property type="protein sequence ID" value="AAP35372.1"/>
    <property type="molecule type" value="mRNA"/>
</dbReference>
<dbReference type="EMBL" id="AK312311">
    <property type="protein sequence ID" value="BAG35236.1"/>
    <property type="molecule type" value="mRNA"/>
</dbReference>
<dbReference type="EMBL" id="CH471080">
    <property type="protein sequence ID" value="EAW63764.1"/>
    <property type="molecule type" value="Genomic_DNA"/>
</dbReference>
<dbReference type="EMBL" id="BC011353">
    <property type="protein sequence ID" value="AAH11353.1"/>
    <property type="molecule type" value="mRNA"/>
</dbReference>
<dbReference type="EMBL" id="X68111">
    <property type="protein sequence ID" value="CAA48230.1"/>
    <property type="molecule type" value="Genomic_DNA"/>
</dbReference>
<dbReference type="CCDS" id="CCDS6012.1"/>
<dbReference type="PIR" id="A26082">
    <property type="entry name" value="LIHUL"/>
</dbReference>
<dbReference type="RefSeq" id="NP_000228.1">
    <property type="nucleotide sequence ID" value="NM_000237.3"/>
</dbReference>
<dbReference type="PDB" id="6E7K">
    <property type="method" value="X-ray"/>
    <property type="resolution" value="2.80 A"/>
    <property type="chains" value="A/B=28-475"/>
</dbReference>
<dbReference type="PDB" id="6OAU">
    <property type="method" value="X-ray"/>
    <property type="resolution" value="2.48 A"/>
    <property type="chains" value="A/B=28-475"/>
</dbReference>
<dbReference type="PDB" id="6OAZ">
    <property type="method" value="X-ray"/>
    <property type="resolution" value="3.04 A"/>
    <property type="chains" value="A/B/C/D=28-475"/>
</dbReference>
<dbReference type="PDB" id="6OB0">
    <property type="method" value="X-ray"/>
    <property type="resolution" value="2.81 A"/>
    <property type="chains" value="A/B/C/D=28-475"/>
</dbReference>
<dbReference type="PDB" id="6WN4">
    <property type="method" value="X-ray"/>
    <property type="resolution" value="2.80 A"/>
    <property type="chains" value="C/D=410-423"/>
</dbReference>
<dbReference type="PDBsum" id="6E7K"/>
<dbReference type="PDBsum" id="6OAU"/>
<dbReference type="PDBsum" id="6OAZ"/>
<dbReference type="PDBsum" id="6OB0"/>
<dbReference type="PDBsum" id="6WN4"/>
<dbReference type="SASBDB" id="P06858"/>
<dbReference type="SMR" id="P06858"/>
<dbReference type="BioGRID" id="110205">
    <property type="interactions" value="52"/>
</dbReference>
<dbReference type="ComplexPortal" id="CPX-6091">
    <property type="entry name" value="LPL-GPIHBP1 triglyceride-rich lipoprotein processing complex"/>
</dbReference>
<dbReference type="FunCoup" id="P06858">
    <property type="interactions" value="160"/>
</dbReference>
<dbReference type="IntAct" id="P06858">
    <property type="interactions" value="36"/>
</dbReference>
<dbReference type="MINT" id="P06858"/>
<dbReference type="STRING" id="9606.ENSP00000497642"/>
<dbReference type="BindingDB" id="P06858"/>
<dbReference type="ChEMBL" id="CHEMBL2060"/>
<dbReference type="DrugBank" id="DB00636">
    <property type="generic name" value="Clofibrate"/>
</dbReference>
<dbReference type="DrugBank" id="DB01241">
    <property type="generic name" value="Gemfibrozil"/>
</dbReference>
<dbReference type="DrugBank" id="DB13751">
    <property type="generic name" value="Glycyrrhizic acid"/>
</dbReference>
<dbReference type="DrugBank" id="DB09568">
    <property type="generic name" value="Omega-3-carboxylic acids"/>
</dbReference>
<dbReference type="DrugBank" id="DB13928">
    <property type="generic name" value="Semaglutide"/>
</dbReference>
<dbReference type="DrugBank" id="DB06439">
    <property type="generic name" value="Tyloxapol"/>
</dbReference>
<dbReference type="DrugCentral" id="P06858"/>
<dbReference type="SwissLipids" id="SLP:000000568"/>
<dbReference type="ESTHER" id="human-LPL">
    <property type="family name" value="Lipoprotein_Lipase"/>
</dbReference>
<dbReference type="GlyConnect" id="2940">
    <property type="glycosylation" value="18 N-Linked glycans (1 site)"/>
</dbReference>
<dbReference type="GlyCosmos" id="P06858">
    <property type="glycosylation" value="2 sites, 24 glycans"/>
</dbReference>
<dbReference type="GlyGen" id="P06858">
    <property type="glycosylation" value="6 sites, 25 N-linked glycans (1 site), 1 O-linked glycan (1 site)"/>
</dbReference>
<dbReference type="iPTMnet" id="P06858"/>
<dbReference type="PhosphoSitePlus" id="P06858"/>
<dbReference type="SwissPalm" id="P06858"/>
<dbReference type="BioMuta" id="LPL"/>
<dbReference type="DMDM" id="126314"/>
<dbReference type="jPOST" id="P06858"/>
<dbReference type="MassIVE" id="P06858"/>
<dbReference type="PaxDb" id="9606-ENSP00000309757"/>
<dbReference type="PeptideAtlas" id="P06858"/>
<dbReference type="ProteomicsDB" id="51936"/>
<dbReference type="Pumba" id="P06858"/>
<dbReference type="ABCD" id="P06858">
    <property type="antibodies" value="1 sequenced antibody"/>
</dbReference>
<dbReference type="Antibodypedia" id="9132">
    <property type="antibodies" value="580 antibodies from 36 providers"/>
</dbReference>
<dbReference type="DNASU" id="4023"/>
<dbReference type="Ensembl" id="ENST00000650287.1">
    <property type="protein sequence ID" value="ENSP00000497642.1"/>
    <property type="gene ID" value="ENSG00000175445.17"/>
</dbReference>
<dbReference type="GeneID" id="4023"/>
<dbReference type="KEGG" id="hsa:4023"/>
<dbReference type="MANE-Select" id="ENST00000650287.1">
    <property type="protein sequence ID" value="ENSP00000497642.1"/>
    <property type="RefSeq nucleotide sequence ID" value="NM_000237.3"/>
    <property type="RefSeq protein sequence ID" value="NP_000228.1"/>
</dbReference>
<dbReference type="UCSC" id="uc003wzk.5">
    <property type="organism name" value="human"/>
</dbReference>
<dbReference type="AGR" id="HGNC:6677"/>
<dbReference type="CTD" id="4023"/>
<dbReference type="DisGeNET" id="4023"/>
<dbReference type="GeneCards" id="LPL"/>
<dbReference type="GeneReviews" id="LPL"/>
<dbReference type="HGNC" id="HGNC:6677">
    <property type="gene designation" value="LPL"/>
</dbReference>
<dbReference type="HPA" id="ENSG00000175445">
    <property type="expression patterns" value="Tissue enhanced (adipose tissue, heart muscle)"/>
</dbReference>
<dbReference type="MalaCards" id="LPL"/>
<dbReference type="MIM" id="144250">
    <property type="type" value="phenotype"/>
</dbReference>
<dbReference type="MIM" id="238600">
    <property type="type" value="phenotype"/>
</dbReference>
<dbReference type="MIM" id="609708">
    <property type="type" value="gene"/>
</dbReference>
<dbReference type="neXtProt" id="NX_P06858"/>
<dbReference type="OpenTargets" id="ENSG00000175445"/>
<dbReference type="Orphanet" id="309015">
    <property type="disease" value="Familial lipoprotein lipase deficiency"/>
</dbReference>
<dbReference type="PharmGKB" id="PA232"/>
<dbReference type="VEuPathDB" id="HostDB:ENSG00000175445"/>
<dbReference type="eggNOG" id="ENOG502QQ7P">
    <property type="taxonomic scope" value="Eukaryota"/>
</dbReference>
<dbReference type="GeneTree" id="ENSGT00940000157178"/>
<dbReference type="HOGENOM" id="CLU_027171_1_0_1"/>
<dbReference type="InParanoid" id="P06858"/>
<dbReference type="OMA" id="AIFVKCS"/>
<dbReference type="OrthoDB" id="199913at2759"/>
<dbReference type="PAN-GO" id="P06858">
    <property type="GO annotations" value="6 GO annotations based on evolutionary models"/>
</dbReference>
<dbReference type="PhylomeDB" id="P06858"/>
<dbReference type="TreeFam" id="TF324997"/>
<dbReference type="BRENDA" id="3.1.1.34">
    <property type="organism ID" value="2681"/>
</dbReference>
<dbReference type="PathwayCommons" id="P06858"/>
<dbReference type="Reactome" id="R-HSA-381340">
    <property type="pathway name" value="Transcriptional regulation of white adipocyte differentiation"/>
</dbReference>
<dbReference type="Reactome" id="R-HSA-8963889">
    <property type="pathway name" value="Assembly of active LPL and LIPC lipase complexes"/>
</dbReference>
<dbReference type="Reactome" id="R-HSA-8963901">
    <property type="pathway name" value="Chylomicron remodeling"/>
</dbReference>
<dbReference type="Reactome" id="R-HSA-975634">
    <property type="pathway name" value="Retinoid metabolism and transport"/>
</dbReference>
<dbReference type="Reactome" id="R-HSA-9841922">
    <property type="pathway name" value="MLL4 and MLL3 complexes regulate expression of PPARG target genes in adipogenesis and hepatic steatosis"/>
</dbReference>
<dbReference type="SignaLink" id="P06858"/>
<dbReference type="SIGNOR" id="P06858"/>
<dbReference type="BioGRID-ORCS" id="4023">
    <property type="hits" value="8 hits in 1170 CRISPR screens"/>
</dbReference>
<dbReference type="ChiTaRS" id="LPL">
    <property type="organism name" value="human"/>
</dbReference>
<dbReference type="GeneWiki" id="Lipoprotein_lipase"/>
<dbReference type="GenomeRNAi" id="4023"/>
<dbReference type="Pharos" id="P06858">
    <property type="development level" value="Tchem"/>
</dbReference>
<dbReference type="PRO" id="PR:P06858"/>
<dbReference type="Proteomes" id="UP000005640">
    <property type="component" value="Chromosome 8"/>
</dbReference>
<dbReference type="RNAct" id="P06858">
    <property type="molecule type" value="protein"/>
</dbReference>
<dbReference type="Bgee" id="ENSG00000175445">
    <property type="expression patterns" value="Expressed in olfactory bulb and 186 other cell types or tissues"/>
</dbReference>
<dbReference type="ExpressionAtlas" id="P06858">
    <property type="expression patterns" value="baseline and differential"/>
</dbReference>
<dbReference type="GO" id="GO:1902494">
    <property type="term" value="C:catalytic complex"/>
    <property type="evidence" value="ECO:0000353"/>
    <property type="project" value="ComplexPortal"/>
</dbReference>
<dbReference type="GO" id="GO:0009986">
    <property type="term" value="C:cell surface"/>
    <property type="evidence" value="ECO:0007669"/>
    <property type="project" value="Ensembl"/>
</dbReference>
<dbReference type="GO" id="GO:0042627">
    <property type="term" value="C:chylomicron"/>
    <property type="evidence" value="ECO:0007669"/>
    <property type="project" value="UniProtKB-KW"/>
</dbReference>
<dbReference type="GO" id="GO:0005576">
    <property type="term" value="C:extracellular region"/>
    <property type="evidence" value="ECO:0000304"/>
    <property type="project" value="Reactome"/>
</dbReference>
<dbReference type="GO" id="GO:0005615">
    <property type="term" value="C:extracellular space"/>
    <property type="evidence" value="ECO:0000314"/>
    <property type="project" value="UniProtKB"/>
</dbReference>
<dbReference type="GO" id="GO:0005886">
    <property type="term" value="C:plasma membrane"/>
    <property type="evidence" value="ECO:0007669"/>
    <property type="project" value="UniProtKB-SubCell"/>
</dbReference>
<dbReference type="GO" id="GO:0034361">
    <property type="term" value="C:very-low-density lipoprotein particle"/>
    <property type="evidence" value="ECO:0007669"/>
    <property type="project" value="UniProtKB-KW"/>
</dbReference>
<dbReference type="GO" id="GO:0034185">
    <property type="term" value="F:apolipoprotein binding"/>
    <property type="evidence" value="ECO:0000353"/>
    <property type="project" value="BHF-UCL"/>
</dbReference>
<dbReference type="GO" id="GO:0005509">
    <property type="term" value="F:calcium ion binding"/>
    <property type="evidence" value="ECO:0000314"/>
    <property type="project" value="UniProtKB"/>
</dbReference>
<dbReference type="GO" id="GO:0043395">
    <property type="term" value="F:heparan sulfate proteoglycan binding"/>
    <property type="evidence" value="ECO:0000315"/>
    <property type="project" value="UniProtKB"/>
</dbReference>
<dbReference type="GO" id="GO:0008201">
    <property type="term" value="F:heparin binding"/>
    <property type="evidence" value="ECO:0000314"/>
    <property type="project" value="UniProtKB"/>
</dbReference>
<dbReference type="GO" id="GO:0004465">
    <property type="term" value="F:lipoprotein lipase activity"/>
    <property type="evidence" value="ECO:0000314"/>
    <property type="project" value="UniProtKB"/>
</dbReference>
<dbReference type="GO" id="GO:0071813">
    <property type="term" value="F:lipoprotein particle binding"/>
    <property type="evidence" value="ECO:0000314"/>
    <property type="project" value="UniProtKB"/>
</dbReference>
<dbReference type="GO" id="GO:0008970">
    <property type="term" value="F:phospholipase A1 activity"/>
    <property type="evidence" value="ECO:0000314"/>
    <property type="project" value="UniProtKB"/>
</dbReference>
<dbReference type="GO" id="GO:0004620">
    <property type="term" value="F:phospholipase activity"/>
    <property type="evidence" value="ECO:0000250"/>
    <property type="project" value="BHF-UCL"/>
</dbReference>
<dbReference type="GO" id="GO:0042803">
    <property type="term" value="F:protein homodimerization activity"/>
    <property type="evidence" value="ECO:0000314"/>
    <property type="project" value="UniProtKB"/>
</dbReference>
<dbReference type="GO" id="GO:0043495">
    <property type="term" value="F:protein-membrane adaptor activity"/>
    <property type="evidence" value="ECO:0000304"/>
    <property type="project" value="ARUK-UCL"/>
</dbReference>
<dbReference type="GO" id="GO:0005102">
    <property type="term" value="F:signaling receptor binding"/>
    <property type="evidence" value="ECO:0000353"/>
    <property type="project" value="BHF-UCL"/>
</dbReference>
<dbReference type="GO" id="GO:0004806">
    <property type="term" value="F:triacylglycerol lipase activity"/>
    <property type="evidence" value="ECO:0000314"/>
    <property type="project" value="UniProtKB"/>
</dbReference>
<dbReference type="GO" id="GO:0071398">
    <property type="term" value="P:cellular response to fatty acid"/>
    <property type="evidence" value="ECO:0000250"/>
    <property type="project" value="ARUK-UCL"/>
</dbReference>
<dbReference type="GO" id="GO:0031670">
    <property type="term" value="P:cellular response to nutrient"/>
    <property type="evidence" value="ECO:0000250"/>
    <property type="project" value="ARUK-UCL"/>
</dbReference>
<dbReference type="GO" id="GO:0042632">
    <property type="term" value="P:cholesterol homeostasis"/>
    <property type="evidence" value="ECO:0000315"/>
    <property type="project" value="BHF-UCL"/>
</dbReference>
<dbReference type="GO" id="GO:0034371">
    <property type="term" value="P:chylomicron remodeling"/>
    <property type="evidence" value="ECO:0000315"/>
    <property type="project" value="UniProtKB"/>
</dbReference>
<dbReference type="GO" id="GO:0006633">
    <property type="term" value="P:fatty acid biosynthetic process"/>
    <property type="evidence" value="ECO:0000314"/>
    <property type="project" value="BHF-UCL"/>
</dbReference>
<dbReference type="GO" id="GO:0006631">
    <property type="term" value="P:fatty acid metabolic process"/>
    <property type="evidence" value="ECO:0000314"/>
    <property type="project" value="UniProtKB"/>
</dbReference>
<dbReference type="GO" id="GO:0034375">
    <property type="term" value="P:high-density lipoprotein particle remodeling"/>
    <property type="evidence" value="ECO:0000318"/>
    <property type="project" value="GO_Central"/>
</dbReference>
<dbReference type="GO" id="GO:0055096">
    <property type="term" value="P:low-density lipoprotein particle mediated signaling"/>
    <property type="evidence" value="ECO:0000315"/>
    <property type="project" value="BHF-UCL"/>
</dbReference>
<dbReference type="GO" id="GO:0006644">
    <property type="term" value="P:phospholipid metabolic process"/>
    <property type="evidence" value="ECO:0000250"/>
    <property type="project" value="BHF-UCL"/>
</dbReference>
<dbReference type="GO" id="GO:1904179">
    <property type="term" value="P:positive regulation of adipose tissue development"/>
    <property type="evidence" value="ECO:0000315"/>
    <property type="project" value="BHF-UCL"/>
</dbReference>
<dbReference type="GO" id="GO:2000343">
    <property type="term" value="P:positive regulation of chemokine (C-X-C motif) ligand 2 production"/>
    <property type="evidence" value="ECO:0000250"/>
    <property type="project" value="ARUK-UCL"/>
</dbReference>
<dbReference type="GO" id="GO:0032722">
    <property type="term" value="P:positive regulation of chemokine production"/>
    <property type="evidence" value="ECO:0000315"/>
    <property type="project" value="BHF-UCL"/>
</dbReference>
<dbReference type="GO" id="GO:0010886">
    <property type="term" value="P:positive regulation of cholesterol storage"/>
    <property type="evidence" value="ECO:0000315"/>
    <property type="project" value="BHF-UCL"/>
</dbReference>
<dbReference type="GO" id="GO:0045600">
    <property type="term" value="P:positive regulation of fat cell differentiation"/>
    <property type="evidence" value="ECO:0000315"/>
    <property type="project" value="ARUK-UCL"/>
</dbReference>
<dbReference type="GO" id="GO:0050729">
    <property type="term" value="P:positive regulation of inflammatory response"/>
    <property type="evidence" value="ECO:0000315"/>
    <property type="project" value="BHF-UCL"/>
</dbReference>
<dbReference type="GO" id="GO:0032731">
    <property type="term" value="P:positive regulation of interleukin-1 beta production"/>
    <property type="evidence" value="ECO:0000250"/>
    <property type="project" value="ARUK-UCL"/>
</dbReference>
<dbReference type="GO" id="GO:0032755">
    <property type="term" value="P:positive regulation of interleukin-6 production"/>
    <property type="evidence" value="ECO:0000250"/>
    <property type="project" value="ARUK-UCL"/>
</dbReference>
<dbReference type="GO" id="GO:0010884">
    <property type="term" value="P:positive regulation of lipid storage"/>
    <property type="evidence" value="ECO:0000304"/>
    <property type="project" value="ARUK-UCL"/>
</dbReference>
<dbReference type="GO" id="GO:0010744">
    <property type="term" value="P:positive regulation of macrophage derived foam cell differentiation"/>
    <property type="evidence" value="ECO:0000315"/>
    <property type="project" value="BHF-UCL"/>
</dbReference>
<dbReference type="GO" id="GO:0032760">
    <property type="term" value="P:positive regulation of tumor necrosis factor production"/>
    <property type="evidence" value="ECO:0000250"/>
    <property type="project" value="ARUK-UCL"/>
</dbReference>
<dbReference type="GO" id="GO:0009617">
    <property type="term" value="P:response to bacterium"/>
    <property type="evidence" value="ECO:0007669"/>
    <property type="project" value="Ensembl"/>
</dbReference>
<dbReference type="GO" id="GO:0009749">
    <property type="term" value="P:response to glucose"/>
    <property type="evidence" value="ECO:0000250"/>
    <property type="project" value="AgBase"/>
</dbReference>
<dbReference type="GO" id="GO:0001523">
    <property type="term" value="P:retinoid metabolic process"/>
    <property type="evidence" value="ECO:0007669"/>
    <property type="project" value="Ensembl"/>
</dbReference>
<dbReference type="GO" id="GO:0019433">
    <property type="term" value="P:triglyceride catabolic process"/>
    <property type="evidence" value="ECO:0000314"/>
    <property type="project" value="UniProtKB"/>
</dbReference>
<dbReference type="GO" id="GO:0070328">
    <property type="term" value="P:triglyceride homeostasis"/>
    <property type="evidence" value="ECO:0000316"/>
    <property type="project" value="BHF-UCL"/>
</dbReference>
<dbReference type="GO" id="GO:0006641">
    <property type="term" value="P:triglyceride metabolic process"/>
    <property type="evidence" value="ECO:0000315"/>
    <property type="project" value="BHF-UCL"/>
</dbReference>
<dbReference type="GO" id="GO:0034447">
    <property type="term" value="P:very-low-density lipoprotein particle clearance"/>
    <property type="evidence" value="ECO:0000250"/>
    <property type="project" value="BHF-UCL"/>
</dbReference>
<dbReference type="GO" id="GO:0034372">
    <property type="term" value="P:very-low-density lipoprotein particle remodeling"/>
    <property type="evidence" value="ECO:0000314"/>
    <property type="project" value="BHF-UCL"/>
</dbReference>
<dbReference type="CDD" id="cd00707">
    <property type="entry name" value="Pancreat_lipase_like"/>
    <property type="match status" value="1"/>
</dbReference>
<dbReference type="CDD" id="cd01758">
    <property type="entry name" value="PLAT_LPL"/>
    <property type="match status" value="1"/>
</dbReference>
<dbReference type="FunFam" id="2.60.60.20:FF:000006">
    <property type="entry name" value="Lipoprotein lipase"/>
    <property type="match status" value="1"/>
</dbReference>
<dbReference type="FunFam" id="3.40.50.1820:FF:000031">
    <property type="entry name" value="Lipoprotein lipase"/>
    <property type="match status" value="1"/>
</dbReference>
<dbReference type="Gene3D" id="3.40.50.1820">
    <property type="entry name" value="alpha/beta hydrolase"/>
    <property type="match status" value="1"/>
</dbReference>
<dbReference type="Gene3D" id="2.60.60.20">
    <property type="entry name" value="PLAT/LH2 domain"/>
    <property type="match status" value="1"/>
</dbReference>
<dbReference type="InterPro" id="IPR029058">
    <property type="entry name" value="AB_hydrolase_fold"/>
</dbReference>
<dbReference type="InterPro" id="IPR013818">
    <property type="entry name" value="Lipase"/>
</dbReference>
<dbReference type="InterPro" id="IPR016272">
    <property type="entry name" value="Lipase_LIPH"/>
</dbReference>
<dbReference type="InterPro" id="IPR033906">
    <property type="entry name" value="Lipase_N"/>
</dbReference>
<dbReference type="InterPro" id="IPR002330">
    <property type="entry name" value="Lipo_Lipase"/>
</dbReference>
<dbReference type="InterPro" id="IPR001024">
    <property type="entry name" value="PLAT/LH2_dom"/>
</dbReference>
<dbReference type="InterPro" id="IPR036392">
    <property type="entry name" value="PLAT/LH2_dom_sf"/>
</dbReference>
<dbReference type="InterPro" id="IPR000734">
    <property type="entry name" value="TAG_lipase"/>
</dbReference>
<dbReference type="NCBIfam" id="TIGR03230">
    <property type="entry name" value="lipo_lipase"/>
    <property type="match status" value="1"/>
</dbReference>
<dbReference type="PANTHER" id="PTHR11610">
    <property type="entry name" value="LIPASE"/>
    <property type="match status" value="1"/>
</dbReference>
<dbReference type="PANTHER" id="PTHR11610:SF3">
    <property type="entry name" value="LIPOPROTEIN LIPASE"/>
    <property type="match status" value="1"/>
</dbReference>
<dbReference type="Pfam" id="PF00151">
    <property type="entry name" value="Lipase"/>
    <property type="match status" value="1"/>
</dbReference>
<dbReference type="Pfam" id="PF01477">
    <property type="entry name" value="PLAT"/>
    <property type="match status" value="1"/>
</dbReference>
<dbReference type="PIRSF" id="PIRSF000865">
    <property type="entry name" value="Lipoprotein_lipase_LIPH"/>
    <property type="match status" value="1"/>
</dbReference>
<dbReference type="PRINTS" id="PR00822">
    <property type="entry name" value="LIPOLIPASE"/>
</dbReference>
<dbReference type="PRINTS" id="PR00821">
    <property type="entry name" value="TAGLIPASE"/>
</dbReference>
<dbReference type="SMART" id="SM00308">
    <property type="entry name" value="LH2"/>
    <property type="match status" value="1"/>
</dbReference>
<dbReference type="SUPFAM" id="SSF53474">
    <property type="entry name" value="alpha/beta-Hydrolases"/>
    <property type="match status" value="1"/>
</dbReference>
<dbReference type="SUPFAM" id="SSF49723">
    <property type="entry name" value="Lipase/lipooxygenase domain (PLAT/LH2 domain)"/>
    <property type="match status" value="1"/>
</dbReference>
<dbReference type="PROSITE" id="PS00120">
    <property type="entry name" value="LIPASE_SER"/>
    <property type="match status" value="1"/>
</dbReference>
<dbReference type="PROSITE" id="PS50095">
    <property type="entry name" value="PLAT"/>
    <property type="match status" value="1"/>
</dbReference>